<comment type="function">
    <text evidence="1 12">Chromatin-binding factor that repress Notch signaling in the absence of Notch intracellular domain by acting as a CBF1 corepressor. Binds to the HEY promoter and might assist, along with NCOR2, RBPJ-mediated repression. Binds RNA in vitro. May be involved in RNA metabolism (PubMed:21475249). In concert with CIC and ATXN1L, involved in brain development (By similarity).</text>
</comment>
<comment type="subunit">
    <text evidence="1 4 6 7 9 11 12 17 18">Homooligomer (PubMed:9097953). Interacts with CIC (By similarity). Interacts with ANP32A, PQBP1, UBQLN4, ATXN1L and USP7 (PubMed:11001934, PubMed:12062018, PubMed:12093161, PubMed:16121196, PubMed:9353121). Directly interacts with RBPJ; this interaction is disrupted in the presence of Notch intracellular domain. Competes with ATXN1L for RBPJ-binding (PubMed:21475249). Found in a complex with CIC and ATXN1L (By similarity).</text>
</comment>
<comment type="interaction">
    <interactant intactId="EBI-930964">
        <id>P54253</id>
    </interactant>
    <interactant intactId="EBI-7223971">
        <id>Q969K4</id>
        <label>ABTB1</label>
    </interactant>
    <organismsDiffer>false</organismsDiffer>
    <experiments>3</experiments>
</comment>
<comment type="interaction">
    <interactant intactId="EBI-930964">
        <id>P54253</id>
    </interactant>
    <interactant intactId="EBI-12137265">
        <id>Q13444-2</id>
        <label>ADAM15</label>
    </interactant>
    <organismsDiffer>false</organismsDiffer>
    <experiments>3</experiments>
</comment>
<comment type="interaction">
    <interactant intactId="EBI-930964">
        <id>P54253</id>
    </interactant>
    <interactant intactId="EBI-948813">
        <id>Q5TGY3</id>
        <label>AHDC1</label>
    </interactant>
    <organismsDiffer>false</organismsDiffer>
    <experiments>5</experiments>
</comment>
<comment type="interaction">
    <interactant intactId="EBI-930964">
        <id>P54253</id>
    </interactant>
    <interactant intactId="EBI-1056291">
        <id>P54819</id>
        <label>AK2</label>
    </interactant>
    <organismsDiffer>false</organismsDiffer>
    <experiments>3</experiments>
</comment>
<comment type="interaction">
    <interactant intactId="EBI-930964">
        <id>P54253</id>
    </interactant>
    <interactant intactId="EBI-296087">
        <id>P31749</id>
        <label>AKT1</label>
    </interactant>
    <organismsDiffer>false</organismsDiffer>
    <experiments>6</experiments>
</comment>
<comment type="interaction">
    <interactant intactId="EBI-930964">
        <id>P54253</id>
    </interactant>
    <interactant intactId="EBI-25806804">
        <id>Q9H553</id>
        <label>ALG2</label>
    </interactant>
    <organismsDiffer>false</organismsDiffer>
    <experiments>3</experiments>
</comment>
<comment type="interaction">
    <interactant intactId="EBI-930964">
        <id>P54253</id>
    </interactant>
    <interactant intactId="EBI-9641396">
        <id>Q8IWZ3-2</id>
        <label>ANKHD1</label>
    </interactant>
    <organismsDiffer>false</organismsDiffer>
    <experiments>3</experiments>
</comment>
<comment type="interaction">
    <interactant intactId="EBI-930964">
        <id>P54253</id>
    </interactant>
    <interactant intactId="EBI-25833200">
        <id>Q8IWZ3-3</id>
        <label>ANKHD1</label>
    </interactant>
    <organismsDiffer>false</organismsDiffer>
    <experiments>6</experiments>
</comment>
<comment type="interaction">
    <interactant intactId="EBI-930964">
        <id>P54253</id>
    </interactant>
    <interactant intactId="EBI-359234">
        <id>P39687</id>
        <label>ANP32A</label>
    </interactant>
    <organismsDiffer>false</organismsDiffer>
    <experiments>3</experiments>
</comment>
<comment type="interaction">
    <interactant intactId="EBI-930964">
        <id>P54253</id>
    </interactant>
    <interactant intactId="EBI-2556915">
        <id>P13928</id>
        <label>ANXA8</label>
    </interactant>
    <organismsDiffer>false</organismsDiffer>
    <experiments>6</experiments>
</comment>
<comment type="interaction">
    <interactant intactId="EBI-930964">
        <id>P54253</id>
    </interactant>
    <interactant intactId="EBI-10185819">
        <id>O43747-2</id>
        <label>AP1G1</label>
    </interactant>
    <organismsDiffer>false</organismsDiffer>
    <experiments>3</experiments>
</comment>
<comment type="interaction">
    <interactant intactId="EBI-930964">
        <id>P54253</id>
    </interactant>
    <interactant intactId="EBI-11529439">
        <id>P63010-2</id>
        <label>AP2B1</label>
    </interactant>
    <organismsDiffer>false</organismsDiffer>
    <experiments>6</experiments>
</comment>
<comment type="interaction">
    <interactant intactId="EBI-930964">
        <id>P54253</id>
    </interactant>
    <interactant intactId="EBI-77613">
        <id>P05067</id>
        <label>APP</label>
    </interactant>
    <organismsDiffer>false</organismsDiffer>
    <experiments>8</experiments>
</comment>
<comment type="interaction">
    <interactant intactId="EBI-930964">
        <id>P54253</id>
    </interactant>
    <interactant intactId="EBI-10694449">
        <id>Q8N6T3-3</id>
        <label>ARFGAP1</label>
    </interactant>
    <organismsDiffer>false</organismsDiffer>
    <experiments>6</experiments>
</comment>
<comment type="interaction">
    <interactant intactId="EBI-930964">
        <id>P54253</id>
    </interactant>
    <interactant intactId="EBI-948603">
        <id>Q03989</id>
        <label>ARID5A</label>
    </interactant>
    <organismsDiffer>false</organismsDiffer>
    <experiments>9</experiments>
</comment>
<comment type="interaction">
    <interactant intactId="EBI-930964">
        <id>P54253</id>
    </interactant>
    <interactant intactId="EBI-10186132">
        <id>Q0P5N6</id>
        <label>ARL16</label>
    </interactant>
    <organismsDiffer>false</organismsDiffer>
    <experiments>6</experiments>
</comment>
<comment type="interaction">
    <interactant intactId="EBI-930964">
        <id>P54253</id>
    </interactant>
    <interactant intactId="EBI-707573">
        <id>Q8WXK3</id>
        <label>ASB13</label>
    </interactant>
    <organismsDiffer>false</organismsDiffer>
    <experiments>6</experiments>
</comment>
<comment type="interaction">
    <interactant intactId="EBI-930964">
        <id>P54253</id>
    </interactant>
    <interactant intactId="EBI-14199987">
        <id>Q9Y575-3</id>
        <label>ASB3</label>
    </interactant>
    <organismsDiffer>false</organismsDiffer>
    <experiments>6</experiments>
</comment>
<comment type="interaction">
    <interactant intactId="EBI-930964">
        <id>P54253</id>
    </interactant>
    <interactant intactId="EBI-25843552">
        <id>Q96DX5-3</id>
        <label>ASB9</label>
    </interactant>
    <organismsDiffer>false</organismsDiffer>
    <experiments>6</experiments>
</comment>
<comment type="interaction">
    <interactant intactId="EBI-930964">
        <id>P54253</id>
    </interactant>
    <interactant intactId="EBI-9089489">
        <id>Q96FT7-4</id>
        <label>ASIC4</label>
    </interactant>
    <organismsDiffer>false</organismsDiffer>
    <experiments>6</experiments>
</comment>
<comment type="interaction">
    <interactant intactId="EBI-930964">
        <id>P54253</id>
    </interactant>
    <interactant intactId="EBI-712767">
        <id>P18847</id>
        <label>ATF3</label>
    </interactant>
    <organismsDiffer>false</organismsDiffer>
    <experiments>6</experiments>
</comment>
<comment type="interaction">
    <interactant intactId="EBI-930964">
        <id>P54253</id>
    </interactant>
    <interactant intactId="EBI-1048913">
        <id>Q9H0Y0</id>
        <label>ATG10</label>
    </interactant>
    <organismsDiffer>false</organismsDiffer>
    <experiments>6</experiments>
</comment>
<comment type="interaction">
    <interactant intactId="EBI-930964">
        <id>P54253</id>
    </interactant>
    <interactant intactId="EBI-356231">
        <id>P06576</id>
        <label>ATP5F1B</label>
    </interactant>
    <organismsDiffer>false</organismsDiffer>
    <experiments>3</experiments>
</comment>
<comment type="interaction">
    <interactant intactId="EBI-930964">
        <id>P54253</id>
    </interactant>
    <interactant intactId="EBI-1049505">
        <id>P30049</id>
        <label>ATP5F1D</label>
    </interactant>
    <organismsDiffer>false</organismsDiffer>
    <experiments>3</experiments>
</comment>
<comment type="interaction">
    <interactant intactId="EBI-930964">
        <id>P54253</id>
    </interactant>
    <interactant intactId="EBI-1044810">
        <id>P24539</id>
        <label>ATP5PB</label>
    </interactant>
    <organismsDiffer>false</organismsDiffer>
    <experiments>3</experiments>
</comment>
<comment type="interaction">
    <interactant intactId="EBI-930964">
        <id>P54253</id>
    </interactant>
    <interactant intactId="EBI-954063">
        <id>P61421</id>
        <label>ATP6V0D1</label>
    </interactant>
    <organismsDiffer>false</organismsDiffer>
    <experiments>7</experiments>
</comment>
<comment type="interaction">
    <interactant intactId="EBI-930964">
        <id>P54253</id>
    </interactant>
    <interactant intactId="EBI-2891281">
        <id>P15313</id>
        <label>ATP6V1B1</label>
    </interactant>
    <organismsDiffer>false</organismsDiffer>
    <experiments>6</experiments>
</comment>
<comment type="interaction">
    <interactant intactId="EBI-930964">
        <id>P54253</id>
    </interactant>
    <interactant intactId="EBI-930964">
        <id>P54253</id>
        <label>ATXN1</label>
    </interactant>
    <organismsDiffer>false</organismsDiffer>
    <experiments>10</experiments>
</comment>
<comment type="interaction">
    <interactant intactId="EBI-930964">
        <id>P54253</id>
    </interactant>
    <interactant intactId="EBI-697691">
        <id>Q99700</id>
        <label>ATXN2</label>
    </interactant>
    <organismsDiffer>false</organismsDiffer>
    <experiments>4</experiments>
</comment>
<comment type="interaction">
    <interactant intactId="EBI-930964">
        <id>P54253</id>
    </interactant>
    <interactant intactId="EBI-25891409">
        <id>Q99700-5</id>
        <label>ATXN2</label>
    </interactant>
    <organismsDiffer>false</organismsDiffer>
    <experiments>6</experiments>
</comment>
<comment type="interaction">
    <interactant intactId="EBI-930964">
        <id>P54253</id>
    </interactant>
    <interactant intactId="EBI-355275">
        <id>O95816</id>
        <label>BAG2</label>
    </interactant>
    <organismsDiffer>false</organismsDiffer>
    <experiments>4</experiments>
</comment>
<comment type="interaction">
    <interactant intactId="EBI-930964">
        <id>P54253</id>
    </interactant>
    <interactant intactId="EBI-9092016">
        <id>Q9UQB8-6</id>
        <label>BAIAP2</label>
    </interactant>
    <organismsDiffer>false</organismsDiffer>
    <experiments>6</experiments>
</comment>
<comment type="interaction">
    <interactant intactId="EBI-930964">
        <id>P54253</id>
    </interactant>
    <interactant intactId="EBI-949378">
        <id>Q14457</id>
        <label>BECN1</label>
    </interactant>
    <organismsDiffer>false</organismsDiffer>
    <experiments>6</experiments>
</comment>
<comment type="interaction">
    <interactant intactId="EBI-930964">
        <id>P54253</id>
    </interactant>
    <interactant intactId="EBI-711810">
        <id>O14503</id>
        <label>BHLHE40</label>
    </interactant>
    <organismsDiffer>false</organismsDiffer>
    <experiments>3</experiments>
</comment>
<comment type="interaction">
    <interactant intactId="EBI-930964">
        <id>P54253</id>
    </interactant>
    <interactant intactId="EBI-1012434">
        <id>Q6AI39</id>
        <label>BICRAL</label>
    </interactant>
    <organismsDiffer>false</organismsDiffer>
    <experiments>3</experiments>
</comment>
<comment type="interaction">
    <interactant intactId="EBI-930964">
        <id>P54253</id>
    </interactant>
    <interactant intactId="EBI-1050987">
        <id>O43684</id>
        <label>BUB3</label>
    </interactant>
    <organismsDiffer>false</organismsDiffer>
    <experiments>7</experiments>
</comment>
<comment type="interaction">
    <interactant intactId="EBI-930964">
        <id>P54253</id>
    </interactant>
    <interactant intactId="EBI-12809220">
        <id>Q5SWW7</id>
        <label>C10orf55</label>
    </interactant>
    <organismsDiffer>false</organismsDiffer>
    <experiments>3</experiments>
</comment>
<comment type="interaction">
    <interactant intactId="EBI-930964">
        <id>P54253</id>
    </interactant>
    <interactant intactId="EBI-946029">
        <id>Q6P1W5</id>
        <label>C1orf94</label>
    </interactant>
    <organismsDiffer>false</organismsDiffer>
    <experiments>18</experiments>
</comment>
<comment type="interaction">
    <interactant intactId="EBI-930964">
        <id>P54253</id>
    </interactant>
    <interactant intactId="EBI-9088162">
        <id>Q9NUB4</id>
        <label>C20orf141</label>
    </interactant>
    <organismsDiffer>false</organismsDiffer>
    <experiments>3</experiments>
</comment>
<comment type="interaction">
    <interactant intactId="EBI-930964">
        <id>P54253</id>
    </interactant>
    <interactant intactId="EBI-5458641">
        <id>Q9BVC5</id>
        <label>C2orf49</label>
    </interactant>
    <organismsDiffer>false</organismsDiffer>
    <experiments>3</experiments>
</comment>
<comment type="interaction">
    <interactant intactId="EBI-930964">
        <id>P54253</id>
    </interactant>
    <interactant intactId="EBI-10697767">
        <id>Q5SZD1</id>
        <label>C6orf141</label>
    </interactant>
    <organismsDiffer>false</organismsDiffer>
    <experiments>6</experiments>
</comment>
<comment type="interaction">
    <interactant intactId="EBI-930964">
        <id>P54253</id>
    </interactant>
    <interactant intactId="EBI-6380130">
        <id>Q14012</id>
        <label>CAMK1</label>
    </interactant>
    <organismsDiffer>false</organismsDiffer>
    <experiments>12</experiments>
</comment>
<comment type="interaction">
    <interactant intactId="EBI-930964">
        <id>P54253</id>
    </interactant>
    <interactant intactId="EBI-518228">
        <id>P22681</id>
        <label>CBL</label>
    </interactant>
    <organismsDiffer>false</organismsDiffer>
    <experiments>3</experiments>
</comment>
<comment type="interaction">
    <interactant intactId="EBI-930964">
        <id>P54253</id>
    </interactant>
    <interactant intactId="EBI-2341018">
        <id>Q9ULV8</id>
        <label>CBLC</label>
    </interactant>
    <organismsDiffer>false</organismsDiffer>
    <experiments>6</experiments>
</comment>
<comment type="interaction">
    <interactant intactId="EBI-930964">
        <id>P54253</id>
    </interactant>
    <interactant intactId="EBI-745269">
        <id>Q9NPC3</id>
        <label>CCNB1IP1</label>
    </interactant>
    <organismsDiffer>false</organismsDiffer>
    <experiments>6</experiments>
</comment>
<comment type="interaction">
    <interactant intactId="EBI-930964">
        <id>P54253</id>
    </interactant>
    <interactant intactId="EBI-739806">
        <id>O75909</id>
        <label>CCNK</label>
    </interactant>
    <organismsDiffer>false</organismsDiffer>
    <experiments>2</experiments>
</comment>
<comment type="interaction">
    <interactant intactId="EBI-930964">
        <id>P54253</id>
    </interactant>
    <interactant intactId="EBI-12010594">
        <id>O75909-2</id>
        <label>CCNK</label>
    </interactant>
    <organismsDiffer>false</organismsDiffer>
    <experiments>6</experiments>
</comment>
<comment type="interaction">
    <interactant intactId="EBI-930964">
        <id>P54253</id>
    </interactant>
    <interactant intactId="EBI-355710">
        <id>P48643</id>
        <label>CCT5</label>
    </interactant>
    <organismsDiffer>false</organismsDiffer>
    <experiments>3</experiments>
</comment>
<comment type="interaction">
    <interactant intactId="EBI-930964">
        <id>P54253</id>
    </interactant>
    <interactant intactId="EBI-356687">
        <id>P40227</id>
        <label>CCT6A</label>
    </interactant>
    <organismsDiffer>false</organismsDiffer>
    <experiments>3</experiments>
</comment>
<comment type="interaction">
    <interactant intactId="EBI-930964">
        <id>P54253</id>
    </interactant>
    <interactant intactId="EBI-396137">
        <id>Q9UJX2</id>
        <label>CDC23</label>
    </interactant>
    <organismsDiffer>false</organismsDiffer>
    <experiments>6</experiments>
</comment>
<comment type="interaction">
    <interactant intactId="EBI-930964">
        <id>P54253</id>
    </interactant>
    <interactant intactId="EBI-2555941">
        <id>Q8NHZ8</id>
        <label>CDC26</label>
    </interactant>
    <organismsDiffer>false</organismsDiffer>
    <experiments>3</experiments>
</comment>
<comment type="interaction">
    <interactant intactId="EBI-930964">
        <id>P54253</id>
    </interactant>
    <interactant intactId="EBI-1210604">
        <id>Q7Z7K6</id>
        <label>CENPV</label>
    </interactant>
    <organismsDiffer>false</organismsDiffer>
    <experiments>6</experiments>
</comment>
<comment type="interaction">
    <interactant intactId="EBI-930964">
        <id>P54253</id>
    </interactant>
    <interactant intactId="EBI-11526150">
        <id>Q8NHQ1-3</id>
        <label>CEP70</label>
    </interactant>
    <organismsDiffer>false</organismsDiffer>
    <experiments>3</experiments>
</comment>
<comment type="interaction">
    <interactant intactId="EBI-930964">
        <id>P54253</id>
    </interactant>
    <interactant intactId="EBI-352733">
        <id>P23528</id>
        <label>CFL1</label>
    </interactant>
    <organismsDiffer>false</organismsDiffer>
    <experiments>11</experiments>
</comment>
<comment type="interaction">
    <interactant intactId="EBI-930964">
        <id>P54253</id>
    </interactant>
    <interactant intactId="EBI-945857">
        <id>Q96RK0</id>
        <label>CIC</label>
    </interactant>
    <organismsDiffer>false</organismsDiffer>
    <experiments>9</experiments>
</comment>
<comment type="interaction">
    <interactant intactId="EBI-930964">
        <id>P54253</id>
    </interactant>
    <interactant intactId="EBI-538850">
        <id>Q14011</id>
        <label>CIRBP</label>
    </interactant>
    <organismsDiffer>false</organismsDiffer>
    <experiments>7</experiments>
</comment>
<comment type="interaction">
    <interactant intactId="EBI-930964">
        <id>P54253</id>
    </interactant>
    <interactant intactId="EBI-617866">
        <id>Q9NSE2</id>
        <label>CISH</label>
    </interactant>
    <organismsDiffer>false</organismsDiffer>
    <experiments>6</experiments>
</comment>
<comment type="interaction">
    <interactant intactId="EBI-930964">
        <id>P54253</id>
    </interactant>
    <interactant intactId="EBI-945751">
        <id>P38432</id>
        <label>COIL</label>
    </interactant>
    <organismsDiffer>false</organismsDiffer>
    <experiments>9</experiments>
</comment>
<comment type="interaction">
    <interactant intactId="EBI-930964">
        <id>P54253</id>
    </interactant>
    <interactant intactId="EBI-10260134">
        <id>Q86WV2</id>
        <label>COX4I1</label>
    </interactant>
    <organismsDiffer>false</organismsDiffer>
    <experiments>6</experiments>
</comment>
<comment type="interaction">
    <interactant intactId="EBI-930964">
        <id>P54253</id>
    </interactant>
    <interactant intactId="EBI-746909">
        <id>Q8N684</id>
        <label>CPSF7</label>
    </interactant>
    <organismsDiffer>false</organismsDiffer>
    <experiments>2</experiments>
</comment>
<comment type="interaction">
    <interactant intactId="EBI-930964">
        <id>P54253</id>
    </interactant>
    <interactant intactId="EBI-11523759">
        <id>Q8N684-3</id>
        <label>CPSF7</label>
    </interactant>
    <organismsDiffer>false</organismsDiffer>
    <experiments>6</experiments>
</comment>
<comment type="interaction">
    <interactant intactId="EBI-930964">
        <id>P54253</id>
    </interactant>
    <interactant intactId="EBI-886">
        <id>P46108</id>
        <label>CRK</label>
    </interactant>
    <organismsDiffer>false</organismsDiffer>
    <experiments>9</experiments>
</comment>
<comment type="interaction">
    <interactant intactId="EBI-930964">
        <id>P54253</id>
    </interactant>
    <interactant intactId="EBI-287559">
        <id>P46108-2</id>
        <label>CRK</label>
    </interactant>
    <organismsDiffer>false</organismsDiffer>
    <experiments>6</experiments>
</comment>
<comment type="interaction">
    <interactant intactId="EBI-930964">
        <id>P54253</id>
    </interactant>
    <interactant intactId="EBI-2872414">
        <id>Q8IUI8</id>
        <label>CRLF3</label>
    </interactant>
    <organismsDiffer>false</organismsDiffer>
    <experiments>6</experiments>
</comment>
<comment type="interaction">
    <interactant intactId="EBI-930964">
        <id>P54253</id>
    </interactant>
    <interactant intactId="EBI-748171">
        <id>O43186</id>
        <label>CRX</label>
    </interactant>
    <organismsDiffer>false</organismsDiffer>
    <experiments>3</experiments>
</comment>
<comment type="interaction">
    <interactant intactId="EBI-930964">
        <id>P54253</id>
    </interactant>
    <interactant intactId="EBI-750444">
        <id>P53672</id>
        <label>CRYBA2</label>
    </interactant>
    <organismsDiffer>false</organismsDiffer>
    <experiments>7</experiments>
</comment>
<comment type="interaction">
    <interactant intactId="EBI-930964">
        <id>P54253</id>
    </interactant>
    <interactant intactId="EBI-10171902">
        <id>P56545-3</id>
        <label>CTBP2</label>
    </interactant>
    <organismsDiffer>false</organismsDiffer>
    <experiments>3</experiments>
</comment>
<comment type="interaction">
    <interactant intactId="EBI-930964">
        <id>P54253</id>
    </interactant>
    <interactant intactId="EBI-456106">
        <id>Q13619</id>
        <label>CUL4A</label>
    </interactant>
    <organismsDiffer>false</organismsDiffer>
    <experiments>6</experiments>
</comment>
<comment type="interaction">
    <interactant intactId="EBI-930964">
        <id>P54253</id>
    </interactant>
    <interactant intactId="EBI-714918">
        <id>Q9NTM9</id>
        <label>CUTC</label>
    </interactant>
    <organismsDiffer>false</organismsDiffer>
    <experiments>3</experiments>
</comment>
<comment type="interaction">
    <interactant intactId="EBI-930964">
        <id>P54253</id>
    </interactant>
    <interactant intactId="EBI-9090939">
        <id>Q5D0E6-2</id>
        <label>DALRD3</label>
    </interactant>
    <organismsDiffer>false</organismsDiffer>
    <experiments>6</experiments>
</comment>
<comment type="interaction">
    <interactant intactId="EBI-930964">
        <id>P54253</id>
    </interactant>
    <interactant intactId="EBI-13357576">
        <id>Q13117-3</id>
        <label>DAZ2</label>
    </interactant>
    <organismsDiffer>false</organismsDiffer>
    <experiments>3</experiments>
</comment>
<comment type="interaction">
    <interactant intactId="EBI-930964">
        <id>P54253</id>
    </interactant>
    <interactant intactId="EBI-724310">
        <id>Q15038</id>
        <label>DAZAP2</label>
    </interactant>
    <organismsDiffer>false</organismsDiffer>
    <experiments>2</experiments>
</comment>
<comment type="interaction">
    <interactant intactId="EBI-930964">
        <id>P54253</id>
    </interactant>
    <interactant intactId="EBI-20852566">
        <id>Q8WV16-4</id>
        <label>DCAF4</label>
    </interactant>
    <organismsDiffer>false</organismsDiffer>
    <experiments>3</experiments>
</comment>
<comment type="interaction">
    <interactant intactId="EBI-930964">
        <id>P54253</id>
    </interactant>
    <interactant intactId="EBI-12091947">
        <id>O75935-2</id>
        <label>DCTN3</label>
    </interactant>
    <organismsDiffer>false</organismsDiffer>
    <experiments>6</experiments>
</comment>
<comment type="interaction">
    <interactant intactId="EBI-930964">
        <id>P54253</id>
    </interactant>
    <interactant intactId="EBI-25858598">
        <id>Q5TDH0-2</id>
        <label>DDI2</label>
    </interactant>
    <organismsDiffer>false</organismsDiffer>
    <experiments>6</experiments>
</comment>
<comment type="interaction">
    <interactant intactId="EBI-930964">
        <id>P54253</id>
    </interactant>
    <interactant intactId="EBI-25842538">
        <id>Q8NDP9</id>
        <label>DKFZp547K2416</label>
    </interactant>
    <organismsDiffer>false</organismsDiffer>
    <experiments>6</experiments>
</comment>
<comment type="interaction">
    <interactant intactId="EBI-930964">
        <id>P54253</id>
    </interactant>
    <interactant intactId="EBI-3908248">
        <id>O60479</id>
        <label>DLX3</label>
    </interactant>
    <organismsDiffer>false</organismsDiffer>
    <experiments>3</experiments>
</comment>
<comment type="interaction">
    <interactant intactId="EBI-930964">
        <id>P54253</id>
    </interactant>
    <interactant intactId="EBI-692774">
        <id>Q09013</id>
        <label>DMPK</label>
    </interactant>
    <organismsDiffer>false</organismsDiffer>
    <experiments>5</experiments>
</comment>
<comment type="interaction">
    <interactant intactId="EBI-930964">
        <id>P54253</id>
    </interactant>
    <interactant intactId="EBI-356767">
        <id>Q96EY1</id>
        <label>DNAJA3</label>
    </interactant>
    <organismsDiffer>false</organismsDiffer>
    <experiments>7</experiments>
</comment>
<comment type="interaction">
    <interactant intactId="EBI-930964">
        <id>P54253</id>
    </interactant>
    <interactant intactId="EBI-11526226">
        <id>Q96EY1-3</id>
        <label>DNAJA3</label>
    </interactant>
    <organismsDiffer>false</organismsDiffer>
    <experiments>6</experiments>
</comment>
<comment type="interaction">
    <interactant intactId="EBI-930964">
        <id>P54253</id>
    </interactant>
    <interactant intactId="EBI-356960">
        <id>Q9UDY4</id>
        <label>DNAJB4</label>
    </interactant>
    <organismsDiffer>false</organismsDiffer>
    <experiments>3</experiments>
</comment>
<comment type="interaction">
    <interactant intactId="EBI-930964">
        <id>P54253</id>
    </interactant>
    <interactant intactId="EBI-948630">
        <id>Q86Y13</id>
        <label>DZIP3</label>
    </interactant>
    <organismsDiffer>false</organismsDiffer>
    <experiments>7</experiments>
</comment>
<comment type="interaction">
    <interactant intactId="EBI-930964">
        <id>P54253</id>
    </interactant>
    <interactant intactId="EBI-2870947">
        <id>Q3B7T1</id>
        <label>EDRF1</label>
    </interactant>
    <organismsDiffer>false</organismsDiffer>
    <experiments>3</experiments>
</comment>
<comment type="interaction">
    <interactant intactId="EBI-930964">
        <id>P54253</id>
    </interactant>
    <interactant intactId="EBI-743414">
        <id>O95967</id>
        <label>EFEMP2</label>
    </interactant>
    <organismsDiffer>false</organismsDiffer>
    <experiments>8</experiments>
</comment>
<comment type="interaction">
    <interactant intactId="EBI-930964">
        <id>P54253</id>
    </interactant>
    <interactant intactId="EBI-286439">
        <id>O14602</id>
        <label>EIF1AY</label>
    </interactant>
    <organismsDiffer>false</organismsDiffer>
    <experiments>7</experiments>
</comment>
<comment type="interaction">
    <interactant intactId="EBI-930964">
        <id>P54253</id>
    </interactant>
    <interactant intactId="EBI-711977">
        <id>P20042</id>
        <label>EIF2S2</label>
    </interactant>
    <organismsDiffer>false</organismsDiffer>
    <experiments>3</experiments>
</comment>
<comment type="interaction">
    <interactant intactId="EBI-930964">
        <id>P54253</id>
    </interactant>
    <interactant intactId="EBI-711990">
        <id>O00303</id>
        <label>EIF3F</label>
    </interactant>
    <organismsDiffer>false</organismsDiffer>
    <experiments>4</experiments>
</comment>
<comment type="interaction">
    <interactant intactId="EBI-930964">
        <id>P54253</id>
    </interactant>
    <interactant intactId="EBI-10232522">
        <id>Q14240-2</id>
        <label>EIF4A2</label>
    </interactant>
    <organismsDiffer>false</organismsDiffer>
    <experiments>3</experiments>
</comment>
<comment type="interaction">
    <interactant intactId="EBI-930964">
        <id>P54253</id>
    </interactant>
    <interactant intactId="EBI-301024">
        <id>Q9NRA8</id>
        <label>EIF4ENIF1</label>
    </interactant>
    <organismsDiffer>false</organismsDiffer>
    <experiments>4</experiments>
</comment>
<comment type="interaction">
    <interactant intactId="EBI-930964">
        <id>P54253</id>
    </interactant>
    <interactant intactId="EBI-374260">
        <id>Q15717</id>
        <label>ELAVL1</label>
    </interactant>
    <organismsDiffer>false</organismsDiffer>
    <experiments>7</experiments>
</comment>
<comment type="interaction">
    <interactant intactId="EBI-930964">
        <id>P54253</id>
    </interactant>
    <interactant intactId="EBI-395274">
        <id>O00472</id>
        <label>ELL2</label>
    </interactant>
    <organismsDiffer>false</organismsDiffer>
    <experiments>6</experiments>
</comment>
<comment type="interaction">
    <interactant intactId="EBI-930964">
        <id>P54253</id>
    </interactant>
    <interactant intactId="EBI-946189">
        <id>Q8TE02</id>
        <label>ELP5</label>
    </interactant>
    <organismsDiffer>false</organismsDiffer>
    <experiments>8</experiments>
</comment>
<comment type="interaction">
    <interactant intactId="EBI-930964">
        <id>P54253</id>
    </interactant>
    <interactant intactId="EBI-1046713">
        <id>Q32P44</id>
        <label>EML3</label>
    </interactant>
    <organismsDiffer>false</organismsDiffer>
    <experiments>3</experiments>
</comment>
<comment type="interaction">
    <interactant intactId="EBI-930964">
        <id>P54253</id>
    </interactant>
    <interactant intactId="EBI-9246952">
        <id>Q8TC29</id>
        <label>ENKUR</label>
    </interactant>
    <organismsDiffer>false</organismsDiffer>
    <experiments>6</experiments>
</comment>
<comment type="interaction">
    <interactant intactId="EBI-930964">
        <id>P54253</id>
    </interactant>
    <interactant intactId="EBI-12135243">
        <id>O95208-2</id>
        <label>EPN2</label>
    </interactant>
    <organismsDiffer>false</organismsDiffer>
    <experiments>3</experiments>
</comment>
<comment type="interaction">
    <interactant intactId="EBI-930964">
        <id>P54253</id>
    </interactant>
    <interactant intactId="EBI-16466949">
        <id>Q13216-2</id>
        <label>ERCC8</label>
    </interactant>
    <organismsDiffer>false</organismsDiffer>
    <experiments>3</experiments>
</comment>
<comment type="interaction">
    <interactant intactId="EBI-930964">
        <id>P54253</id>
    </interactant>
    <interactant intactId="EBI-10213520">
        <id>Q6NXG1</id>
        <label>ESRP1</label>
    </interactant>
    <organismsDiffer>false</organismsDiffer>
    <experiments>12</experiments>
</comment>
<comment type="interaction">
    <interactant intactId="EBI-930964">
        <id>P54253</id>
    </interactant>
    <interactant intactId="EBI-21567429">
        <id>Q6NXG1-3</id>
        <label>ESRP1</label>
    </interactant>
    <organismsDiffer>false</organismsDiffer>
    <experiments>6</experiments>
</comment>
<comment type="interaction">
    <interactant intactId="EBI-930964">
        <id>P54253</id>
    </interactant>
    <interactant intactId="EBI-1754679">
        <id>O43909</id>
        <label>EXTL3</label>
    </interactant>
    <organismsDiffer>false</organismsDiffer>
    <experiments>3</experiments>
</comment>
<comment type="interaction">
    <interactant intactId="EBI-930964">
        <id>P54253</id>
    </interactant>
    <interactant intactId="EBI-12940382">
        <id>P0C7A2-2</id>
        <label>FAM153B</label>
    </interactant>
    <organismsDiffer>false</organismsDiffer>
    <experiments>3</experiments>
</comment>
<comment type="interaction">
    <interactant intactId="EBI-930964">
        <id>P54253</id>
    </interactant>
    <interactant intactId="EBI-11978259">
        <id>Q92567-2</id>
        <label>FAM168A</label>
    </interactant>
    <organismsDiffer>false</organismsDiffer>
    <experiments>3</experiments>
</comment>
<comment type="interaction">
    <interactant intactId="EBI-930964">
        <id>P54253</id>
    </interactant>
    <interactant intactId="EBI-353803">
        <id>Q9NSD9</id>
        <label>FARSB</label>
    </interactant>
    <organismsDiffer>false</organismsDiffer>
    <experiments>3</experiments>
</comment>
<comment type="interaction">
    <interactant intactId="EBI-930964">
        <id>P54253</id>
    </interactant>
    <interactant intactId="EBI-948245">
        <id>P14324</id>
        <label>FDPS</label>
    </interactant>
    <organismsDiffer>false</organismsDiffer>
    <experiments>4</experiments>
</comment>
<comment type="interaction">
    <interactant intactId="EBI-930964">
        <id>P54253</id>
    </interactant>
    <interactant intactId="EBI-396453">
        <id>Q9UHY8</id>
        <label>FEZ2</label>
    </interactant>
    <organismsDiffer>false</organismsDiffer>
    <experiments>6</experiments>
</comment>
<comment type="interaction">
    <interactant intactId="EBI-930964">
        <id>P54253</id>
    </interactant>
    <interactant intactId="EBI-719873">
        <id>P26885</id>
        <label>FKBP2</label>
    </interactant>
    <organismsDiffer>false</organismsDiffer>
    <experiments>3</experiments>
</comment>
<comment type="interaction">
    <interactant intactId="EBI-930964">
        <id>P54253</id>
    </interactant>
    <interactant intactId="EBI-12142257">
        <id>Q8TBE3</id>
        <label>FNDC9</label>
    </interactant>
    <organismsDiffer>false</organismsDiffer>
    <experiments>3</experiments>
</comment>
<comment type="interaction">
    <interactant intactId="EBI-930964">
        <id>P54253</id>
    </interactant>
    <interactant intactId="EBI-11749712">
        <id>Q96NZ1</id>
        <label>FOXN4</label>
    </interactant>
    <organismsDiffer>false</organismsDiffer>
    <experiments>3</experiments>
</comment>
<comment type="interaction">
    <interactant intactId="EBI-930964">
        <id>P54253</id>
    </interactant>
    <interactant intactId="EBI-713279">
        <id>P02792</id>
        <label>FTL</label>
    </interactant>
    <organismsDiffer>false</organismsDiffer>
    <experiments>6</experiments>
</comment>
<comment type="interaction">
    <interactant intactId="EBI-930964">
        <id>P54253</id>
    </interactant>
    <interactant intactId="EBI-515315">
        <id>P06241</id>
        <label>FYN</label>
    </interactant>
    <organismsDiffer>false</organismsDiffer>
    <experiments>8</experiments>
</comment>
<comment type="interaction">
    <interactant intactId="EBI-930964">
        <id>P54253</id>
    </interactant>
    <interactant intactId="EBI-10691738">
        <id>P06241-3</id>
        <label>FYN</label>
    </interactant>
    <organismsDiffer>false</organismsDiffer>
    <experiments>6</experiments>
</comment>
<comment type="interaction">
    <interactant intactId="EBI-930964">
        <id>P54253</id>
    </interactant>
    <interactant intactId="EBI-618189">
        <id>Q06547-2</id>
        <label>GABPB1</label>
    </interactant>
    <organismsDiffer>false</organismsDiffer>
    <experiments>6</experiments>
</comment>
<comment type="interaction">
    <interactant intactId="EBI-930964">
        <id>P54253</id>
    </interactant>
    <interactant intactId="EBI-23893155">
        <id>F2Z2M7</id>
        <label>GALNT10</label>
    </interactant>
    <organismsDiffer>false</organismsDiffer>
    <experiments>6</experiments>
</comment>
<comment type="interaction">
    <interactant intactId="EBI-930964">
        <id>P54253</id>
    </interactant>
    <interactant intactId="EBI-947242">
        <id>P28676</id>
        <label>GCA</label>
    </interactant>
    <organismsDiffer>false</organismsDiffer>
    <experiments>4</experiments>
</comment>
<comment type="interaction">
    <interactant intactId="EBI-930964">
        <id>P54253</id>
    </interactant>
    <interactant intactId="EBI-948296">
        <id>Q9UKD1</id>
        <label>GMEB2</label>
    </interactant>
    <organismsDiffer>false</organismsDiffer>
    <experiments>5</experiments>
</comment>
<comment type="interaction">
    <interactant intactId="EBI-930964">
        <id>P54253</id>
    </interactant>
    <interactant intactId="EBI-739467">
        <id>Q9H8Y8</id>
        <label>GORASP2</label>
    </interactant>
    <organismsDiffer>false</organismsDiffer>
    <experiments>3</experiments>
</comment>
<comment type="interaction">
    <interactant intactId="EBI-930964">
        <id>P54253</id>
    </interactant>
    <interactant intactId="EBI-948259">
        <id>Q9UKJ3</id>
        <label>GPATCH8</label>
    </interactant>
    <organismsDiffer>false</organismsDiffer>
    <experiments>4</experiments>
</comment>
<comment type="interaction">
    <interactant intactId="EBI-930964">
        <id>P54253</id>
    </interactant>
    <interactant intactId="EBI-352469">
        <id>Q93079</id>
        <label>H2BC9</label>
    </interactant>
    <organismsDiffer>false</organismsDiffer>
    <experiments>3</experiments>
</comment>
<comment type="interaction">
    <interactant intactId="EBI-930964">
        <id>P54253</id>
    </interactant>
    <interactant intactId="EBI-722264">
        <id>P15822</id>
        <label>HIVEP1</label>
    </interactant>
    <organismsDiffer>false</organismsDiffer>
    <experiments>6</experiments>
</comment>
<comment type="interaction">
    <interactant intactId="EBI-930964">
        <id>P54253</id>
    </interactant>
    <interactant intactId="EBI-25845242">
        <id>Q8WVV9-3</id>
        <label>HNRNPLL</label>
    </interactant>
    <organismsDiffer>false</organismsDiffer>
    <experiments>6</experiments>
</comment>
<comment type="interaction">
    <interactant intactId="EBI-930964">
        <id>P54253</id>
    </interactant>
    <interactant intactId="EBI-3923226">
        <id>P09017</id>
        <label>HOXC4</label>
    </interactant>
    <organismsDiffer>false</organismsDiffer>
    <experiments>6</experiments>
</comment>
<comment type="interaction">
    <interactant intactId="EBI-930964">
        <id>P54253</id>
    </interactant>
    <interactant intactId="EBI-749311">
        <id>P37235</id>
        <label>HPCAL1</label>
    </interactant>
    <organismsDiffer>false</organismsDiffer>
    <experiments>7</experiments>
</comment>
<comment type="interaction">
    <interactant intactId="EBI-930964">
        <id>P54253</id>
    </interactant>
    <interactant intactId="EBI-947253">
        <id>Q9UBD0</id>
        <label>HSFX2</label>
    </interactant>
    <organismsDiffer>false</organismsDiffer>
    <experiments>6</experiments>
</comment>
<comment type="interaction">
    <interactant intactId="EBI-930964">
        <id>P54253</id>
    </interactant>
    <interactant intactId="EBI-3957665">
        <id>Q96LI6</id>
        <label>HSFY2</label>
    </interactant>
    <organismsDiffer>false</organismsDiffer>
    <experiments>3</experiments>
</comment>
<comment type="interaction">
    <interactant intactId="EBI-930964">
        <id>P54253</id>
    </interactant>
    <interactant intactId="EBI-11052499">
        <id>P0DMV8</id>
        <label>HSPA1A</label>
    </interactant>
    <organismsDiffer>false</organismsDiffer>
    <experiments>3</experiments>
</comment>
<comment type="interaction">
    <interactant intactId="EBI-930964">
        <id>P54253</id>
    </interactant>
    <interactant intactId="EBI-351896">
        <id>P11142</id>
        <label>HSPA8</label>
    </interactant>
    <organismsDiffer>false</organismsDiffer>
    <experiments>13</experiments>
</comment>
<comment type="interaction">
    <interactant intactId="EBI-930964">
        <id>P54253</id>
    </interactant>
    <interactant intactId="EBI-12823003">
        <id>P80217-2</id>
        <label>IFI35</label>
    </interactant>
    <organismsDiffer>false</organismsDiffer>
    <experiments>3</experiments>
</comment>
<comment type="interaction">
    <interactant intactId="EBI-930964">
        <id>P54253</id>
    </interactant>
    <interactant intactId="EBI-9091197">
        <id>Q8IY31-3</id>
        <label>IFT20</label>
    </interactant>
    <organismsDiffer>false</organismsDiffer>
    <experiments>3</experiments>
</comment>
<comment type="interaction">
    <interactant intactId="EBI-930964">
        <id>P54253</id>
    </interactant>
    <interactant intactId="EBI-12330251">
        <id>P29218-3</id>
        <label>IMPA1</label>
    </interactant>
    <organismsDiffer>false</organismsDiffer>
    <experiments>3</experiments>
</comment>
<comment type="interaction">
    <interactant intactId="EBI-930964">
        <id>P54253</id>
    </interactant>
    <interactant intactId="EBI-21911304">
        <id>Q6DN90-2</id>
        <label>IQSEC1</label>
    </interactant>
    <organismsDiffer>false</organismsDiffer>
    <experiments>6</experiments>
</comment>
<comment type="interaction">
    <interactant intactId="EBI-930964">
        <id>P54253</id>
    </interactant>
    <interactant intactId="EBI-945994">
        <id>P53990</id>
        <label>IST1</label>
    </interactant>
    <organismsDiffer>false</organismsDiffer>
    <experiments>2</experiments>
</comment>
<comment type="interaction">
    <interactant intactId="EBI-930964">
        <id>P54253</id>
    </interactant>
    <interactant intactId="EBI-4402971">
        <id>P53990-2</id>
        <label>IST1</label>
    </interactant>
    <organismsDiffer>false</organismsDiffer>
    <experiments>6</experiments>
</comment>
<comment type="interaction">
    <interactant intactId="EBI-930964">
        <id>P54253</id>
    </interactant>
    <interactant intactId="EBI-12188567">
        <id>P53990-3</id>
        <label>IST1</label>
    </interactant>
    <organismsDiffer>false</organismsDiffer>
    <experiments>9</experiments>
</comment>
<comment type="interaction">
    <interactant intactId="EBI-930964">
        <id>P54253</id>
    </interactant>
    <interactant intactId="EBI-2127319">
        <id>O14713</id>
        <label>ITGB1BP1</label>
    </interactant>
    <organismsDiffer>false</organismsDiffer>
    <experiments>3</experiments>
</comment>
<comment type="interaction">
    <interactant intactId="EBI-930964">
        <id>P54253</id>
    </interactant>
    <interactant intactId="EBI-399080">
        <id>Q92993</id>
        <label>KAT5</label>
    </interactant>
    <organismsDiffer>false</organismsDiffer>
    <experiments>9</experiments>
</comment>
<comment type="interaction">
    <interactant intactId="EBI-930964">
        <id>P54253</id>
    </interactant>
    <interactant intactId="EBI-20795332">
        <id>Q92993-2</id>
        <label>KAT5</label>
    </interactant>
    <organismsDiffer>false</organismsDiffer>
    <experiments>3</experiments>
</comment>
<comment type="interaction">
    <interactant intactId="EBI-930964">
        <id>P54253</id>
    </interactant>
    <interactant intactId="EBI-25871195">
        <id>Q9NVX7-2</id>
        <label>KBTBD4</label>
    </interactant>
    <organismsDiffer>false</organismsDiffer>
    <experiments>6</experiments>
</comment>
<comment type="interaction">
    <interactant intactId="EBI-930964">
        <id>P54253</id>
    </interactant>
    <interactant intactId="EBI-12382297">
        <id>Q96SI1-2</id>
        <label>KCTD15</label>
    </interactant>
    <organismsDiffer>false</organismsDiffer>
    <experiments>6</experiments>
</comment>
<comment type="interaction">
    <interactant intactId="EBI-930964">
        <id>P54253</id>
    </interactant>
    <interactant intactId="EBI-8472267">
        <id>P57682</id>
        <label>KLF3</label>
    </interactant>
    <organismsDiffer>false</organismsDiffer>
    <experiments>4</experiments>
</comment>
<comment type="interaction">
    <interactant intactId="EBI-930964">
        <id>P54253</id>
    </interactant>
    <interactant intactId="EBI-2696013">
        <id>Q13887</id>
        <label>KLF5</label>
    </interactant>
    <organismsDiffer>false</organismsDiffer>
    <experiments>7</experiments>
</comment>
<comment type="interaction">
    <interactant intactId="EBI-930964">
        <id>P54253</id>
    </interactant>
    <interactant intactId="EBI-740929">
        <id>Q53G59</id>
        <label>KLHL12</label>
    </interactant>
    <organismsDiffer>false</organismsDiffer>
    <experiments>8</experiments>
</comment>
<comment type="interaction">
    <interactant intactId="EBI-930964">
        <id>P54253</id>
    </interactant>
    <interactant intactId="EBI-21328926">
        <id>Q6TDP4</id>
        <label>KLHL17</label>
    </interactant>
    <organismsDiffer>false</organismsDiffer>
    <experiments>6</experiments>
</comment>
<comment type="interaction">
    <interactant intactId="EBI-930964">
        <id>P54253</id>
    </interactant>
    <interactant intactId="EBI-714379">
        <id>Q9Y2M5</id>
        <label>KLHL20</label>
    </interactant>
    <organismsDiffer>false</organismsDiffer>
    <experiments>6</experiments>
</comment>
<comment type="interaction">
    <interactant intactId="EBI-930964">
        <id>P54253</id>
    </interactant>
    <interactant intactId="EBI-10973851">
        <id>Q8N4N3-2</id>
        <label>KLHL36</label>
    </interactant>
    <organismsDiffer>false</organismsDiffer>
    <experiments>6</experiments>
</comment>
<comment type="interaction">
    <interactant intactId="EBI-930964">
        <id>P54253</id>
    </interactant>
    <interactant intactId="EBI-10176396">
        <id>P60329</id>
        <label>KRTAP12-4</label>
    </interactant>
    <organismsDiffer>false</organismsDiffer>
    <experiments>3</experiments>
</comment>
<comment type="interaction">
    <interactant intactId="EBI-930964">
        <id>P54253</id>
    </interactant>
    <interactant intactId="EBI-10241252">
        <id>Q3SY46</id>
        <label>KRTAP13-3</label>
    </interactant>
    <organismsDiffer>false</organismsDiffer>
    <experiments>3</experiments>
</comment>
<comment type="interaction">
    <interactant intactId="EBI-930964">
        <id>P54253</id>
    </interactant>
    <interactant intactId="EBI-12811111">
        <id>Q8IUB9</id>
        <label>KRTAP19-1</label>
    </interactant>
    <organismsDiffer>false</organismsDiffer>
    <experiments>3</experiments>
</comment>
<comment type="interaction">
    <interactant intactId="EBI-930964">
        <id>P54253</id>
    </interactant>
    <interactant intactId="EBI-10261141">
        <id>Q8IUC2</id>
        <label>KRTAP8-1</label>
    </interactant>
    <organismsDiffer>false</organismsDiffer>
    <experiments>6</experiments>
</comment>
<comment type="interaction">
    <interactant intactId="EBI-930964">
        <id>P54253</id>
    </interactant>
    <interactant intactId="EBI-1044640">
        <id>Q9BYQ4</id>
        <label>KRTAP9-2</label>
    </interactant>
    <organismsDiffer>false</organismsDiffer>
    <experiments>3</experiments>
</comment>
<comment type="interaction">
    <interactant intactId="EBI-930964">
        <id>P54253</id>
    </interactant>
    <interactant intactId="EBI-11985629">
        <id>Q96JM7-2</id>
        <label>L3MBTL3</label>
    </interactant>
    <organismsDiffer>false</organismsDiffer>
    <experiments>6</experiments>
</comment>
<comment type="interaction">
    <interactant intactId="EBI-930964">
        <id>P54253</id>
    </interactant>
    <interactant intactId="EBI-9088686">
        <id>Q14847-2</id>
        <label>LASP1</label>
    </interactant>
    <organismsDiffer>false</organismsDiffer>
    <experiments>9</experiments>
</comment>
<comment type="interaction">
    <interactant intactId="EBI-930964">
        <id>P54253</id>
    </interactant>
    <interactant intactId="EBI-8473670">
        <id>O95447</id>
        <label>LCA5L</label>
    </interactant>
    <organismsDiffer>false</organismsDiffer>
    <experiments>3</experiments>
</comment>
<comment type="interaction">
    <interactant intactId="EBI-930964">
        <id>P54253</id>
    </interactant>
    <interactant intactId="EBI-1108377">
        <id>Q9BYZ2</id>
        <label>LDHAL6B</label>
    </interactant>
    <organismsDiffer>false</organismsDiffer>
    <experiments>6</experiments>
</comment>
<comment type="interaction">
    <interactant intactId="EBI-930964">
        <id>P54253</id>
    </interactant>
    <interactant intactId="EBI-9088829">
        <id>Q6DKI2</id>
        <label>LGALS9C</label>
    </interactant>
    <organismsDiffer>false</organismsDiffer>
    <experiments>6</experiments>
</comment>
<comment type="interaction">
    <interactant intactId="EBI-930964">
        <id>P54253</id>
    </interactant>
    <interactant intactId="EBI-10258746">
        <id>Q9UPM6</id>
        <label>LHX6</label>
    </interactant>
    <organismsDiffer>false</organismsDiffer>
    <experiments>6</experiments>
</comment>
<comment type="interaction">
    <interactant intactId="EBI-930964">
        <id>P54253</id>
    </interactant>
    <interactant intactId="EBI-10264791">
        <id>Q8N0U6</id>
        <label>LINC00518</label>
    </interactant>
    <organismsDiffer>false</organismsDiffer>
    <experiments>6</experiments>
</comment>
<comment type="interaction">
    <interactant intactId="EBI-930964">
        <id>P54253</id>
    </interactant>
    <interactant intactId="EBI-739832">
        <id>Q8TBB1</id>
        <label>LNX1</label>
    </interactant>
    <organismsDiffer>false</organismsDiffer>
    <experiments>6</experiments>
</comment>
<comment type="interaction">
    <interactant intactId="EBI-930964">
        <id>P54253</id>
    </interactant>
    <interactant intactId="EBI-2340947">
        <id>Q8N448</id>
        <label>LNX2</label>
    </interactant>
    <organismsDiffer>false</organismsDiffer>
    <experiments>6</experiments>
</comment>
<comment type="interaction">
    <interactant intactId="EBI-930964">
        <id>P54253</id>
    </interactant>
    <interactant intactId="EBI-720984">
        <id>Q6UWE0</id>
        <label>LRSAM1</label>
    </interactant>
    <organismsDiffer>false</organismsDiffer>
    <experiments>4</experiments>
</comment>
<comment type="interaction">
    <interactant intactId="EBI-930964">
        <id>P54253</id>
    </interactant>
    <interactant intactId="EBI-10225084">
        <id>Q86VM6</id>
        <label>MBNL1</label>
    </interactant>
    <organismsDiffer>false</organismsDiffer>
    <experiments>6</experiments>
</comment>
<comment type="interaction">
    <interactant intactId="EBI-930964">
        <id>P54253</id>
    </interactant>
    <interactant intactId="EBI-25978262">
        <id>Q9NR56-5</id>
        <label>MBNL1</label>
    </interactant>
    <organismsDiffer>false</organismsDiffer>
    <experiments>6</experiments>
</comment>
<comment type="interaction">
    <interactant intactId="EBI-930964">
        <id>P54253</id>
    </interactant>
    <interactant intactId="EBI-11030807">
        <id>Q96RN5-2</id>
        <label>MED15</label>
    </interactant>
    <organismsDiffer>false</organismsDiffer>
    <experiments>6</experiments>
</comment>
<comment type="interaction">
    <interactant intactId="EBI-930964">
        <id>P54253</id>
    </interactant>
    <interactant intactId="EBI-749353">
        <id>Q9H7H0</id>
        <label>METTL17</label>
    </interactant>
    <organismsDiffer>false</organismsDiffer>
    <experiments>5</experiments>
</comment>
<comment type="interaction">
    <interactant intactId="EBI-930964">
        <id>P54253</id>
    </interactant>
    <interactant intactId="EBI-11098807">
        <id>Q9H7H0-2</id>
        <label>METTL17</label>
    </interactant>
    <organismsDiffer>false</organismsDiffer>
    <experiments>6</experiments>
</comment>
<comment type="interaction">
    <interactant intactId="EBI-930964">
        <id>P54253</id>
    </interactant>
    <interactant intactId="EBI-8487781">
        <id>Q8N6F8</id>
        <label>METTL27</label>
    </interactant>
    <organismsDiffer>false</organismsDiffer>
    <experiments>9</experiments>
</comment>
<comment type="interaction">
    <interactant intactId="EBI-930964">
        <id>P54253</id>
    </interactant>
    <interactant intactId="EBI-4397720">
        <id>Q8TDB4</id>
        <label>MGARP</label>
    </interactant>
    <organismsDiffer>false</organismsDiffer>
    <experiments>6</experiments>
</comment>
<comment type="interaction">
    <interactant intactId="EBI-930964">
        <id>P54253</id>
    </interactant>
    <interactant intactId="EBI-21250407">
        <id>A4FUJ8</id>
        <label>MKL1</label>
    </interactant>
    <organismsDiffer>false</organismsDiffer>
    <experiments>6</experiments>
</comment>
<comment type="interaction">
    <interactant intactId="EBI-930964">
        <id>P54253</id>
    </interactant>
    <interactant intactId="EBI-73837">
        <id>Q9BUB5</id>
        <label>MKNK1</label>
    </interactant>
    <organismsDiffer>false</organismsDiffer>
    <experiments>6</experiments>
</comment>
<comment type="interaction">
    <interactant intactId="EBI-930964">
        <id>P54253</id>
    </interactant>
    <interactant intactId="EBI-373206">
        <id>O95396</id>
        <label>MOCS3</label>
    </interactant>
    <organismsDiffer>false</organismsDiffer>
    <experiments>6</experiments>
</comment>
<comment type="interaction">
    <interactant intactId="EBI-930964">
        <id>P54253</id>
    </interactant>
    <interactant intactId="EBI-2512452">
        <id>Q8N594</id>
        <label>MPND</label>
    </interactant>
    <organismsDiffer>false</organismsDiffer>
    <experiments>6</experiments>
</comment>
<comment type="interaction">
    <interactant intactId="EBI-930964">
        <id>P54253</id>
    </interactant>
    <interactant intactId="EBI-995714">
        <id>Q9Y605</id>
        <label>MRFAP1</label>
    </interactant>
    <organismsDiffer>false</organismsDiffer>
    <experiments>6</experiments>
</comment>
<comment type="interaction">
    <interactant intactId="EBI-930964">
        <id>P54253</id>
    </interactant>
    <interactant intactId="EBI-748896">
        <id>Q96HT8</id>
        <label>MRFAP1L1</label>
    </interactant>
    <organismsDiffer>false</organismsDiffer>
    <experiments>6</experiments>
</comment>
<comment type="interaction">
    <interactant intactId="EBI-930964">
        <id>P54253</id>
    </interactant>
    <interactant intactId="EBI-302378">
        <id>O95411</id>
        <label>MYO18A</label>
    </interactant>
    <organismsDiffer>false</organismsDiffer>
    <experiments>3</experiments>
</comment>
<comment type="interaction">
    <interactant intactId="EBI-930964">
        <id>P54253</id>
    </interactant>
    <interactant intactId="EBI-373505">
        <id>O43776</id>
        <label>NARS1</label>
    </interactant>
    <organismsDiffer>false</organismsDiffer>
    <experiments>4</experiments>
</comment>
<comment type="interaction">
    <interactant intactId="EBI-930964">
        <id>P54253</id>
    </interactant>
    <interactant intactId="EBI-2880203">
        <id>O76041</id>
        <label>NEBL</label>
    </interactant>
    <organismsDiffer>false</organismsDiffer>
    <experiments>3</experiments>
</comment>
<comment type="interaction">
    <interactant intactId="EBI-930964">
        <id>P54253</id>
    </interactant>
    <interactant intactId="EBI-1752987">
        <id>Q86SG6</id>
        <label>NEK8</label>
    </interactant>
    <organismsDiffer>false</organismsDiffer>
    <experiments>3</experiments>
</comment>
<comment type="interaction">
    <interactant intactId="EBI-930964">
        <id>P54253</id>
    </interactant>
    <interactant intactId="EBI-2130062">
        <id>Q12986</id>
        <label>NFX1</label>
    </interactant>
    <organismsDiffer>false</organismsDiffer>
    <experiments>3</experiments>
</comment>
<comment type="interaction">
    <interactant intactId="EBI-930964">
        <id>P54253</id>
    </interactant>
    <interactant intactId="EBI-11061759">
        <id>P23511-2</id>
        <label>NFYA</label>
    </interactant>
    <organismsDiffer>false</organismsDiffer>
    <experiments>3</experiments>
</comment>
<comment type="interaction">
    <interactant intactId="EBI-930964">
        <id>P54253</id>
    </interactant>
    <interactant intactId="EBI-2859639">
        <id>Q5HYW2</id>
        <label>NHSL2</label>
    </interactant>
    <organismsDiffer>false</organismsDiffer>
    <experiments>3</experiments>
</comment>
<comment type="interaction">
    <interactant intactId="EBI-930964">
        <id>P54253</id>
    </interactant>
    <interactant intactId="EBI-366978">
        <id>Q9UBE8</id>
        <label>NLK</label>
    </interactant>
    <organismsDiffer>false</organismsDiffer>
    <experiments>4</experiments>
</comment>
<comment type="interaction">
    <interactant intactId="EBI-930964">
        <id>P54253</id>
    </interactant>
    <interactant intactId="EBI-744871">
        <id>O00746</id>
        <label>NME4</label>
    </interactant>
    <organismsDiffer>false</organismsDiffer>
    <experiments>6</experiments>
</comment>
<comment type="interaction">
    <interactant intactId="EBI-930964">
        <id>P54253</id>
    </interactant>
    <interactant intactId="EBI-740667">
        <id>P56597</id>
        <label>NME5</label>
    </interactant>
    <organismsDiffer>false</organismsDiffer>
    <experiments>3</experiments>
</comment>
<comment type="interaction">
    <interactant intactId="EBI-930964">
        <id>P54253</id>
    </interactant>
    <interactant intactId="EBI-4280135">
        <id>Q15738</id>
        <label>NSDHL</label>
    </interactant>
    <organismsDiffer>false</organismsDiffer>
    <experiments>3</experiments>
</comment>
<comment type="interaction">
    <interactant intactId="EBI-930964">
        <id>P54253</id>
    </interactant>
    <interactant intactId="EBI-355720">
        <id>O43809</id>
        <label>NUDT21</label>
    </interactant>
    <organismsDiffer>false</organismsDiffer>
    <experiments>8</experiments>
</comment>
<comment type="interaction">
    <interactant intactId="EBI-930964">
        <id>P54253</id>
    </interactant>
    <interactant intactId="EBI-1059321">
        <id>Q8NFH3</id>
        <label>NUP43</label>
    </interactant>
    <organismsDiffer>false</organismsDiffer>
    <experiments>6</experiments>
</comment>
<comment type="interaction">
    <interactant intactId="EBI-930964">
        <id>P54253</id>
    </interactant>
    <interactant intactId="EBI-18577082">
        <id>O15381-5</id>
        <label>NVL</label>
    </interactant>
    <organismsDiffer>false</organismsDiffer>
    <experiments>3</experiments>
</comment>
<comment type="interaction">
    <interactant intactId="EBI-930964">
        <id>P54253</id>
    </interactant>
    <interactant intactId="EBI-747213">
        <id>Q02218</id>
        <label>OGDH</label>
    </interactant>
    <organismsDiffer>false</organismsDiffer>
    <experiments>3</experiments>
</comment>
<comment type="interaction">
    <interactant intactId="EBI-930964">
        <id>P54253</id>
    </interactant>
    <interactant intactId="EBI-1058491">
        <id>Q96FW1</id>
        <label>OTUB1</label>
    </interactant>
    <organismsDiffer>false</organismsDiffer>
    <experiments>6</experiments>
</comment>
<comment type="interaction">
    <interactant intactId="EBI-930964">
        <id>P54253</id>
    </interactant>
    <interactant intactId="EBI-25830200">
        <id>Q6GQQ9-2</id>
        <label>OTUD7B</label>
    </interactant>
    <organismsDiffer>false</organismsDiffer>
    <experiments>6</experiments>
</comment>
<comment type="interaction">
    <interactant intactId="EBI-930964">
        <id>P54253</id>
    </interactant>
    <interactant intactId="EBI-9087860">
        <id>P32243-2</id>
        <label>OTX2</label>
    </interactant>
    <organismsDiffer>false</organismsDiffer>
    <experiments>3</experiments>
</comment>
<comment type="interaction">
    <interactant intactId="EBI-930964">
        <id>P54253</id>
    </interactant>
    <interactant intactId="EBI-2555014">
        <id>Q6VY07</id>
        <label>PACS1</label>
    </interactant>
    <organismsDiffer>false</organismsDiffer>
    <experiments>6</experiments>
</comment>
<comment type="interaction">
    <interactant intactId="EBI-930964">
        <id>P54253</id>
    </interactant>
    <interactant intactId="EBI-17242559">
        <id>Q495U3</id>
        <label>PANX2</label>
    </interactant>
    <organismsDiffer>false</organismsDiffer>
    <experiments>3</experiments>
</comment>
<comment type="interaction">
    <interactant intactId="EBI-930964">
        <id>P54253</id>
    </interactant>
    <interactant intactId="EBI-22012354">
        <id>Q9BR81</id>
        <label>PCDHGC3</label>
    </interactant>
    <organismsDiffer>false</organismsDiffer>
    <experiments>6</experiments>
</comment>
<comment type="interaction">
    <interactant intactId="EBI-930964">
        <id>P54253</id>
    </interactant>
    <interactant intactId="EBI-12386584">
        <id>P22061-2</id>
        <label>PCMT1</label>
    </interactant>
    <organismsDiffer>false</organismsDiffer>
    <experiments>3</experiments>
</comment>
<comment type="interaction">
    <interactant intactId="EBI-930964">
        <id>P54253</id>
    </interactant>
    <interactant intactId="EBI-6309018">
        <id>Q9NV79</id>
        <label>PCMTD2</label>
    </interactant>
    <organismsDiffer>false</organismsDiffer>
    <experiments>6</experiments>
</comment>
<comment type="interaction">
    <interactant intactId="EBI-930964">
        <id>P54253</id>
    </interactant>
    <interactant intactId="EBI-751267">
        <id>Q96HC4</id>
        <label>PDLIM5</label>
    </interactant>
    <organismsDiffer>false</organismsDiffer>
    <experiments>6</experiments>
</comment>
<comment type="interaction">
    <interactant intactId="EBI-930964">
        <id>P54253</id>
    </interactant>
    <interactant intactId="EBI-716063">
        <id>Q13113</id>
        <label>PDZK1IP1</label>
    </interactant>
    <organismsDiffer>false</organismsDiffer>
    <experiments>6</experiments>
</comment>
<comment type="interaction">
    <interactant intactId="EBI-930964">
        <id>P54253</id>
    </interactant>
    <interactant intactId="EBI-948765">
        <id>P12955</id>
        <label>PEPD</label>
    </interactant>
    <organismsDiffer>false</organismsDiffer>
    <experiments>4</experiments>
</comment>
<comment type="interaction">
    <interactant intactId="EBI-930964">
        <id>P54253</id>
    </interactant>
    <interactant intactId="EBI-1053271">
        <id>O00541</id>
        <label>PES1</label>
    </interactant>
    <organismsDiffer>false</organismsDiffer>
    <experiments>3</experiments>
</comment>
<comment type="interaction">
    <interactant intactId="EBI-930964">
        <id>P54253</id>
    </interactant>
    <interactant intactId="EBI-740955">
        <id>Q9NRX4</id>
        <label>PHPT1</label>
    </interactant>
    <organismsDiffer>false</organismsDiffer>
    <experiments>8</experiments>
</comment>
<comment type="interaction">
    <interactant intactId="EBI-930964">
        <id>P54253</id>
    </interactant>
    <interactant intactId="EBI-629434">
        <id>O75925</id>
        <label>PIAS1</label>
    </interactant>
    <organismsDiffer>false</organismsDiffer>
    <experiments>7</experiments>
</comment>
<comment type="interaction">
    <interactant intactId="EBI-930964">
        <id>P54253</id>
    </interactant>
    <interactant intactId="EBI-11031437">
        <id>Q13492-3</id>
        <label>PICALM</label>
    </interactant>
    <organismsDiffer>false</organismsDiffer>
    <experiments>3</experiments>
</comment>
<comment type="interaction">
    <interactant intactId="EBI-930964">
        <id>P54253</id>
    </interactant>
    <interactant intactId="EBI-2116585">
        <id>P42336</id>
        <label>PIK3CA</label>
    </interactant>
    <organismsDiffer>false</organismsDiffer>
    <experiments>3</experiments>
</comment>
<comment type="interaction">
    <interactant intactId="EBI-930964">
        <id>P54253</id>
    </interactant>
    <interactant intactId="EBI-720425">
        <id>Q9P1W9</id>
        <label>PIM2</label>
    </interactant>
    <organismsDiffer>false</organismsDiffer>
    <experiments>4</experiments>
</comment>
<comment type="interaction">
    <interactant intactId="EBI-930964">
        <id>P54253</id>
    </interactant>
    <interactant intactId="EBI-527417">
        <id>Q96J94</id>
        <label>PIWIL1</label>
    </interactant>
    <organismsDiffer>false</organismsDiffer>
    <experiments>3</experiments>
</comment>
<comment type="interaction">
    <interactant intactId="EBI-930964">
        <id>P54253</id>
    </interactant>
    <interactant intactId="EBI-726466">
        <id>O15496</id>
        <label>PLA2G10</label>
    </interactant>
    <organismsDiffer>false</organismsDiffer>
    <experiments>3</experiments>
</comment>
<comment type="interaction">
    <interactant intactId="EBI-930964">
        <id>P54253</id>
    </interactant>
    <interactant intactId="EBI-945934">
        <id>Q9HAU0</id>
        <label>PLEKHA5</label>
    </interactant>
    <organismsDiffer>false</organismsDiffer>
    <experiments>2</experiments>
</comment>
<comment type="interaction">
    <interactant intactId="EBI-930964">
        <id>P54253</id>
    </interactant>
    <interactant intactId="EBI-12891828">
        <id>Q6ZR37</id>
        <label>PLEKHG7</label>
    </interactant>
    <organismsDiffer>false</organismsDiffer>
    <experiments>6</experiments>
</comment>
<comment type="interaction">
    <interactant intactId="EBI-930964">
        <id>P54253</id>
    </interactant>
    <interactant intactId="EBI-12014286">
        <id>Q494U1-3</id>
        <label>PLEKHN1</label>
    </interactant>
    <organismsDiffer>false</organismsDiffer>
    <experiments>6</experiments>
</comment>
<comment type="interaction">
    <interactant intactId="EBI-930964">
        <id>P54253</id>
    </interactant>
    <interactant intactId="EBI-11743883">
        <id>O43660-2</id>
        <label>PLRG1</label>
    </interactant>
    <organismsDiffer>false</organismsDiffer>
    <experiments>3</experiments>
</comment>
<comment type="interaction">
    <interactant intactId="EBI-930964">
        <id>P54253</id>
    </interactant>
    <interactant intactId="EBI-1389308">
        <id>Q7Z3K3</id>
        <label>POGZ</label>
    </interactant>
    <organismsDiffer>false</organismsDiffer>
    <experiments>3</experiments>
</comment>
<comment type="interaction">
    <interactant intactId="EBI-930964">
        <id>P54253</id>
    </interactant>
    <interactant intactId="EBI-355434">
        <id>Q9P1U0</id>
        <label>POLR1H</label>
    </interactant>
    <organismsDiffer>false</organismsDiffer>
    <experiments>3</experiments>
</comment>
<comment type="interaction">
    <interactant intactId="EBI-930964">
        <id>P54253</id>
    </interactant>
    <interactant intactId="EBI-11956563">
        <id>Q96HA1-2</id>
        <label>POM121</label>
    </interactant>
    <organismsDiffer>false</organismsDiffer>
    <experiments>3</experiments>
</comment>
<comment type="interaction">
    <interactant intactId="EBI-930964">
        <id>P54253</id>
    </interactant>
    <interactant intactId="EBI-25835994">
        <id>Q6ZMI0-5</id>
        <label>PPP1R21</label>
    </interactant>
    <organismsDiffer>false</organismsDiffer>
    <experiments>6</experiments>
</comment>
<comment type="interaction">
    <interactant intactId="EBI-930964">
        <id>P54253</id>
    </interactant>
    <interactant intactId="EBI-713867">
        <id>O60828</id>
        <label>PQBP1</label>
    </interactant>
    <organismsDiffer>false</organismsDiffer>
    <experiments>3</experiments>
</comment>
<comment type="interaction">
    <interactant intactId="EBI-930964">
        <id>P54253</id>
    </interactant>
    <interactant intactId="EBI-2211957">
        <id>Q13162</id>
        <label>PRDX4</label>
    </interactant>
    <organismsDiffer>false</organismsDiffer>
    <experiments>4</experiments>
</comment>
<comment type="interaction">
    <interactant intactId="EBI-930964">
        <id>P54253</id>
    </interactant>
    <interactant intactId="EBI-476586">
        <id>P17612</id>
        <label>PRKACA</label>
    </interactant>
    <organismsDiffer>false</organismsDiffer>
    <experiments>3</experiments>
</comment>
<comment type="interaction">
    <interactant intactId="EBI-930964">
        <id>P54253</id>
    </interactant>
    <interactant intactId="EBI-21251460">
        <id>O60260-5</id>
        <label>PRKN</label>
    </interactant>
    <organismsDiffer>false</organismsDiffer>
    <experiments>6</experiments>
</comment>
<comment type="interaction">
    <interactant intactId="EBI-930964">
        <id>P54253</id>
    </interactant>
    <interactant intactId="EBI-538479">
        <id>Q6P2Q9</id>
        <label>PRPF8</label>
    </interactant>
    <organismsDiffer>false</organismsDiffer>
    <experiments>6</experiments>
</comment>
<comment type="interaction">
    <interactant intactId="EBI-930964">
        <id>P54253</id>
    </interactant>
    <interactant intactId="EBI-10172814">
        <id>P86479</id>
        <label>PRR20C</label>
    </interactant>
    <organismsDiffer>false</organismsDiffer>
    <experiments>3</experiments>
</comment>
<comment type="interaction">
    <interactant intactId="EBI-930964">
        <id>P54253</id>
    </interactant>
    <interactant intactId="EBI-12754095">
        <id>P86480</id>
        <label>PRR20D</label>
    </interactant>
    <organismsDiffer>false</organismsDiffer>
    <experiments>3</experiments>
</comment>
<comment type="interaction">
    <interactant intactId="EBI-930964">
        <id>P54253</id>
    </interactant>
    <interactant intactId="EBI-347545">
        <id>P48634</id>
        <label>PRRC2A</label>
    </interactant>
    <organismsDiffer>false</organismsDiffer>
    <experiments>4</experiments>
</comment>
<comment type="interaction">
    <interactant intactId="EBI-930964">
        <id>P54253</id>
    </interactant>
    <interactant intactId="EBI-744891">
        <id>Q5JSZ5</id>
        <label>PRRC2B</label>
    </interactant>
    <organismsDiffer>false</organismsDiffer>
    <experiments>5</experiments>
</comment>
<comment type="interaction">
    <interactant intactId="EBI-930964">
        <id>P54253</id>
    </interactant>
    <interactant intactId="EBI-21531669">
        <id>Q5JSZ5-5</id>
        <label>PRRC2B</label>
    </interactant>
    <organismsDiffer>false</organismsDiffer>
    <experiments>6</experiments>
</comment>
<comment type="interaction">
    <interactant intactId="EBI-930964">
        <id>P54253</id>
    </interactant>
    <interactant intactId="EBI-359352">
        <id>P25786</id>
        <label>PSMA1</label>
    </interactant>
    <organismsDiffer>false</organismsDiffer>
    <experiments>3</experiments>
</comment>
<comment type="interaction">
    <interactant intactId="EBI-930964">
        <id>P54253</id>
    </interactant>
    <interactant intactId="EBI-359310">
        <id>P25789</id>
        <label>PSMA4</label>
    </interactant>
    <organismsDiffer>false</organismsDiffer>
    <experiments>7</experiments>
</comment>
<comment type="interaction">
    <interactant intactId="EBI-930964">
        <id>P54253</id>
    </interactant>
    <interactant intactId="EBI-603350">
        <id>P28070</id>
        <label>PSMB4</label>
    </interactant>
    <organismsDiffer>false</organismsDiffer>
    <experiments>6</experiments>
</comment>
<comment type="interaction">
    <interactant intactId="EBI-930964">
        <id>P54253</id>
    </interactant>
    <interactant intactId="EBI-372312">
        <id>P28062-2</id>
        <label>PSMB8</label>
    </interactant>
    <organismsDiffer>false</organismsDiffer>
    <experiments>6</experiments>
</comment>
<comment type="interaction">
    <interactant intactId="EBI-930964">
        <id>P54253</id>
    </interactant>
    <interactant intactId="EBI-359720">
        <id>P17980</id>
        <label>PSMC3</label>
    </interactant>
    <organismsDiffer>false</organismsDiffer>
    <experiments>7</experiments>
</comment>
<comment type="interaction">
    <interactant intactId="EBI-930964">
        <id>P54253</id>
    </interactant>
    <interactant intactId="EBI-948821">
        <id>P41222</id>
        <label>PTGDS</label>
    </interactant>
    <organismsDiffer>false</organismsDiffer>
    <experiments>5</experiments>
</comment>
<comment type="interaction">
    <interactant intactId="EBI-930964">
        <id>P54253</id>
    </interactant>
    <interactant intactId="EBI-10966812">
        <id>Q15032-2</id>
        <label>R3HDM1</label>
    </interactant>
    <organismsDiffer>false</organismsDiffer>
    <experiments>3</experiments>
</comment>
<comment type="interaction">
    <interactant intactId="EBI-930964">
        <id>P54253</id>
    </interactant>
    <interactant intactId="EBI-2339393">
        <id>Q9NS91</id>
        <label>RAD18</label>
    </interactant>
    <organismsDiffer>false</organismsDiffer>
    <experiments>6</experiments>
</comment>
<comment type="interaction">
    <interactant intactId="EBI-930964">
        <id>P54253</id>
    </interactant>
    <interactant intactId="EBI-746453">
        <id>P54725</id>
        <label>RAD23A</label>
    </interactant>
    <organismsDiffer>false</organismsDiffer>
    <experiments>3</experiments>
</comment>
<comment type="interaction">
    <interactant intactId="EBI-930964">
        <id>P54253</id>
    </interactant>
    <interactant intactId="EBI-740830">
        <id>Q9Y620</id>
        <label>RAD54B</label>
    </interactant>
    <organismsDiffer>false</organismsDiffer>
    <experiments>3</experiments>
</comment>
<comment type="interaction">
    <interactant intactId="EBI-930964">
        <id>P54253</id>
    </interactant>
    <interactant intactId="EBI-25977442">
        <id>Q8WZA2-3</id>
        <label>RAPGEF4</label>
    </interactant>
    <organismsDiffer>false</organismsDiffer>
    <experiments>3</experiments>
</comment>
<comment type="interaction">
    <interactant intactId="EBI-930964">
        <id>P54253</id>
    </interactant>
    <interactant intactId="EBI-22012855">
        <id>Q13702-2</id>
        <label>RAPSN</label>
    </interactant>
    <organismsDiffer>false</organismsDiffer>
    <experiments>6</experiments>
</comment>
<comment type="interaction">
    <interactant intactId="EBI-930964">
        <id>P54253</id>
    </interactant>
    <interactant intactId="EBI-620823">
        <id>Q09028</id>
        <label>RBBP4</label>
    </interactant>
    <organismsDiffer>false</organismsDiffer>
    <experiments>3</experiments>
</comment>
<comment type="interaction">
    <interactant intactId="EBI-930964">
        <id>P54253</id>
    </interactant>
    <interactant intactId="EBI-2340624">
        <id>Q9BYM8</id>
        <label>RBCK1</label>
    </interactant>
    <organismsDiffer>false</organismsDiffer>
    <experiments>6</experiments>
</comment>
<comment type="interaction">
    <interactant intactId="EBI-930964">
        <id>P54253</id>
    </interactant>
    <interactant intactId="EBI-945906">
        <id>Q9NWB1</id>
        <label>RBFOX1</label>
    </interactant>
    <organismsDiffer>false</organismsDiffer>
    <experiments>2</experiments>
</comment>
<comment type="interaction">
    <interactant intactId="EBI-930964">
        <id>P54253</id>
    </interactant>
    <interactant intactId="EBI-12123390">
        <id>Q9NWB1-5</id>
        <label>RBFOX1</label>
    </interactant>
    <organismsDiffer>false</organismsDiffer>
    <experiments>6</experiments>
</comment>
<comment type="interaction">
    <interactant intactId="EBI-930964">
        <id>P54253</id>
    </interactant>
    <interactant intactId="EBI-746056">
        <id>O43251</id>
        <label>RBFOX2</label>
    </interactant>
    <organismsDiffer>false</organismsDiffer>
    <experiments>10</experiments>
</comment>
<comment type="interaction">
    <interactant intactId="EBI-930964">
        <id>P54253</id>
    </interactant>
    <interactant intactId="EBI-11963050">
        <id>O43251-10</id>
        <label>RBFOX2</label>
    </interactant>
    <organismsDiffer>false</organismsDiffer>
    <experiments>3</experiments>
</comment>
<comment type="interaction">
    <interactant intactId="EBI-930964">
        <id>P54253</id>
    </interactant>
    <interactant intactId="EBI-740272">
        <id>Q96I25</id>
        <label>RBM17</label>
    </interactant>
    <organismsDiffer>false</organismsDiffer>
    <experiments>5</experiments>
</comment>
<comment type="interaction">
    <interactant intactId="EBI-930964">
        <id>P54253</id>
    </interactant>
    <interactant intactId="EBI-632552">
        <id>Q06330</id>
        <label>RBPJ</label>
    </interactant>
    <organismsDiffer>false</organismsDiffer>
    <experiments>7</experiments>
</comment>
<comment type="interaction">
    <interactant intactId="EBI-930964">
        <id>P54253</id>
    </interactant>
    <interactant intactId="EBI-740322">
        <id>Q93062</id>
        <label>RBPMS</label>
    </interactant>
    <organismsDiffer>false</organismsDiffer>
    <experiments>6</experiments>
</comment>
<comment type="interaction">
    <interactant intactId="EBI-930964">
        <id>P54253</id>
    </interactant>
    <interactant intactId="EBI-740343">
        <id>Q93062-3</id>
        <label>RBPMS</label>
    </interactant>
    <organismsDiffer>false</organismsDiffer>
    <experiments>6</experiments>
</comment>
<comment type="interaction">
    <interactant intactId="EBI-930964">
        <id>P54253</id>
    </interactant>
    <interactant intactId="EBI-948278">
        <id>Q15293</id>
        <label>RCN1</label>
    </interactant>
    <organismsDiffer>false</organismsDiffer>
    <experiments>9</experiments>
</comment>
<comment type="interaction">
    <interactant intactId="EBI-930964">
        <id>P54253</id>
    </interactant>
    <interactant intactId="EBI-307352">
        <id>Q04864</id>
        <label>REL</label>
    </interactant>
    <organismsDiffer>false</organismsDiffer>
    <experiments>3</experiments>
</comment>
<comment type="interaction">
    <interactant intactId="EBI-930964">
        <id>P54253</id>
    </interactant>
    <interactant intactId="EBI-10829018">
        <id>Q04864-2</id>
        <label>REL</label>
    </interactant>
    <organismsDiffer>false</organismsDiffer>
    <experiments>3</experiments>
</comment>
<comment type="interaction">
    <interactant intactId="EBI-930964">
        <id>P54253</id>
    </interactant>
    <interactant intactId="EBI-746555">
        <id>Q8TAI7</id>
        <label>RHEBL1</label>
    </interactant>
    <organismsDiffer>false</organismsDiffer>
    <experiments>3</experiments>
</comment>
<comment type="interaction">
    <interactant intactId="EBI-930964">
        <id>P54253</id>
    </interactant>
    <interactant intactId="EBI-372094">
        <id>Q9BQY4</id>
        <label>RHOXF2</label>
    </interactant>
    <organismsDiffer>false</organismsDiffer>
    <experiments>4</experiments>
</comment>
<comment type="interaction">
    <interactant intactId="EBI-930964">
        <id>P54253</id>
    </interactant>
    <interactant intactId="EBI-2797992">
        <id>Q9H871</id>
        <label>RMND5A</label>
    </interactant>
    <organismsDiffer>false</organismsDiffer>
    <experiments>6</experiments>
</comment>
<comment type="interaction">
    <interactant intactId="EBI-930964">
        <id>P54253</id>
    </interactant>
    <interactant intactId="EBI-21535400">
        <id>Q6ZNA4-2</id>
        <label>RNF111</label>
    </interactant>
    <organismsDiffer>false</organismsDiffer>
    <experiments>6</experiments>
</comment>
<comment type="interaction">
    <interactant intactId="EBI-930964">
        <id>P54253</id>
    </interactant>
    <interactant intactId="EBI-25829984">
        <id>Q9ULX5</id>
        <label>RNF112</label>
    </interactant>
    <organismsDiffer>false</organismsDiffer>
    <experiments>6</experiments>
</comment>
<comment type="interaction">
    <interactant intactId="EBI-930964">
        <id>P54253</id>
    </interactant>
    <interactant intactId="EBI-1551681">
        <id>Q8WU17</id>
        <label>RNF139</label>
    </interactant>
    <organismsDiffer>false</organismsDiffer>
    <experiments>6</experiments>
</comment>
<comment type="interaction">
    <interactant intactId="EBI-930964">
        <id>P54253</id>
    </interactant>
    <interactant intactId="EBI-743938">
        <id>Q96D59</id>
        <label>RNF183</label>
    </interactant>
    <organismsDiffer>false</organismsDiffer>
    <experiments>6</experiments>
</comment>
<comment type="interaction">
    <interactant intactId="EBI-930964">
        <id>P54253</id>
    </interactant>
    <interactant intactId="EBI-722416">
        <id>Q99496</id>
        <label>RNF2</label>
    </interactant>
    <organismsDiffer>false</organismsDiffer>
    <experiments>6</experiments>
</comment>
<comment type="interaction">
    <interactant intactId="EBI-930964">
        <id>P54253</id>
    </interactant>
    <interactant intactId="EBI-948111">
        <id>Q96EP0</id>
        <label>RNF31</label>
    </interactant>
    <organismsDiffer>false</organismsDiffer>
    <experiments>4</experiments>
</comment>
<comment type="interaction">
    <interactant intactId="EBI-930964">
        <id>P54253</id>
    </interactant>
    <interactant intactId="EBI-25866807">
        <id>Q9H0F5-2</id>
        <label>RNF38</label>
    </interactant>
    <organismsDiffer>false</organismsDiffer>
    <experiments>6</experiments>
</comment>
<comment type="interaction">
    <interactant intactId="EBI-930964">
        <id>P54253</id>
    </interactant>
    <interactant intactId="EBI-352398">
        <id>P27635</id>
        <label>RPL10</label>
    </interactant>
    <organismsDiffer>false</organismsDiffer>
    <experiments>3</experiments>
</comment>
<comment type="interaction">
    <interactant intactId="EBI-930964">
        <id>P54253</id>
    </interactant>
    <interactant intactId="EBI-443462">
        <id>P61313</id>
        <label>RPL15</label>
    </interactant>
    <organismsDiffer>false</organismsDiffer>
    <experiments>3</experiments>
</comment>
<comment type="interaction">
    <interactant intactId="EBI-930964">
        <id>P54253</id>
    </interactant>
    <interactant intactId="EBI-352694">
        <id>Q07020</id>
        <label>RPL18</label>
    </interactant>
    <organismsDiffer>false</organismsDiffer>
    <experiments>3</experiments>
</comment>
<comment type="interaction">
    <interactant intactId="EBI-930964">
        <id>P54253</id>
    </interactant>
    <interactant intactId="EBI-916524">
        <id>P84098</id>
        <label>RPL19</label>
    </interactant>
    <organismsDiffer>false</organismsDiffer>
    <experiments>3</experiments>
</comment>
<comment type="interaction">
    <interactant intactId="EBI-930964">
        <id>P54253</id>
    </interactant>
    <interactant intactId="EBI-354533">
        <id>P35268</id>
        <label>RPL22</label>
    </interactant>
    <organismsDiffer>false</organismsDiffer>
    <experiments>3</experiments>
</comment>
<comment type="interaction">
    <interactant intactId="EBI-930964">
        <id>P54253</id>
    </interactant>
    <interactant intactId="EBI-354451">
        <id>P39019</id>
        <label>RPS19</label>
    </interactant>
    <organismsDiffer>false</organismsDiffer>
    <experiments>3</experiments>
</comment>
<comment type="interaction">
    <interactant intactId="EBI-930964">
        <id>P54253</id>
    </interactant>
    <interactant intactId="EBI-350569">
        <id>P46782</id>
        <label>RPS5</label>
    </interactant>
    <organismsDiffer>false</organismsDiffer>
    <experiments>3</experiments>
</comment>
<comment type="interaction">
    <interactant intactId="EBI-930964">
        <id>P54253</id>
    </interactant>
    <interactant intactId="EBI-752324">
        <id>Q8N488</id>
        <label>RYBP</label>
    </interactant>
    <organismsDiffer>false</organismsDiffer>
    <experiments>6</experiments>
</comment>
<comment type="interaction">
    <interactant intactId="EBI-930964">
        <id>P54253</id>
    </interactant>
    <interactant intactId="EBI-11528848">
        <id>Q8N6K7-2</id>
        <label>SAMD3</label>
    </interactant>
    <organismsDiffer>false</organismsDiffer>
    <experiments>3</experiments>
</comment>
<comment type="interaction">
    <interactant intactId="EBI-930964">
        <id>P54253</id>
    </interactant>
    <interactant intactId="EBI-3920694">
        <id>Q9NR31</id>
        <label>SAR1A</label>
    </interactant>
    <organismsDiffer>false</organismsDiffer>
    <experiments>3</experiments>
</comment>
<comment type="interaction">
    <interactant intactId="EBI-930964">
        <id>P54253</id>
    </interactant>
    <interactant intactId="EBI-727004">
        <id>O00560</id>
        <label>SDCBP</label>
    </interactant>
    <organismsDiffer>false</organismsDiffer>
    <experiments>6</experiments>
</comment>
<comment type="interaction">
    <interactant intactId="EBI-930964">
        <id>P54253</id>
    </interactant>
    <interactant intactId="EBI-350723">
        <id>P50454</id>
        <label>SERPINH1</label>
    </interactant>
    <organismsDiffer>false</organismsDiffer>
    <experiments>3</experiments>
</comment>
<comment type="interaction">
    <interactant intactId="EBI-930964">
        <id>P54253</id>
    </interactant>
    <interactant intactId="EBI-12223157">
        <id>Q15637-4</id>
        <label>SF1</label>
    </interactant>
    <organismsDiffer>false</organismsDiffer>
    <experiments>3</experiments>
</comment>
<comment type="interaction">
    <interactant intactId="EBI-930964">
        <id>P54253</id>
    </interactant>
    <interactant intactId="EBI-1051880">
        <id>Q12874</id>
        <label>SF3A3</label>
    </interactant>
    <organismsDiffer>false</organismsDiffer>
    <experiments>6</experiments>
</comment>
<comment type="interaction">
    <interactant intactId="EBI-930964">
        <id>P54253</id>
    </interactant>
    <interactant intactId="EBI-346977">
        <id>Q15393</id>
        <label>SF3B3</label>
    </interactant>
    <organismsDiffer>false</organismsDiffer>
    <experiments>3</experiments>
</comment>
<comment type="interaction">
    <interactant intactId="EBI-930964">
        <id>P54253</id>
    </interactant>
    <interactant intactId="EBI-10182463">
        <id>Q2NKQ1-4</id>
        <label>SGSM1</label>
    </interactant>
    <organismsDiffer>false</organismsDiffer>
    <experiments>6</experiments>
</comment>
<comment type="interaction">
    <interactant intactId="EBI-930964">
        <id>P54253</id>
    </interactant>
    <interactant intactId="EBI-11522811">
        <id>Q8IUQ4-2</id>
        <label>SIAH1</label>
    </interactant>
    <organismsDiffer>false</organismsDiffer>
    <experiments>3</experiments>
</comment>
<comment type="interaction">
    <interactant intactId="EBI-930964">
        <id>P54253</id>
    </interactant>
    <interactant intactId="EBI-946167">
        <id>Q8N196</id>
        <label>SIX5</label>
    </interactant>
    <organismsDiffer>false</organismsDiffer>
    <experiments>4</experiments>
</comment>
<comment type="interaction">
    <interactant intactId="EBI-930964">
        <id>P54253</id>
    </interactant>
    <interactant intactId="EBI-358545">
        <id>Q9GZS3</id>
        <label>SKIC8</label>
    </interactant>
    <organismsDiffer>false</organismsDiffer>
    <experiments>6</experiments>
</comment>
<comment type="interaction">
    <interactant intactId="EBI-930964">
        <id>P54253</id>
    </interactant>
    <interactant intactId="EBI-307486">
        <id>P63208</id>
        <label>SKP1</label>
    </interactant>
    <organismsDiffer>false</organismsDiffer>
    <experiments>6</experiments>
</comment>
<comment type="interaction">
    <interactant intactId="EBI-930964">
        <id>P54253</id>
    </interactant>
    <interactant intactId="EBI-945738">
        <id>Q86UW1</id>
        <label>SLC51A</label>
    </interactant>
    <organismsDiffer>false</organismsDiffer>
    <experiments>7</experiments>
</comment>
<comment type="interaction">
    <interactant intactId="EBI-930964">
        <id>P54253</id>
    </interactant>
    <interactant intactId="EBI-25831241">
        <id>Q9NSD5-3</id>
        <label>SLC6A13</label>
    </interactant>
    <organismsDiffer>false</organismsDiffer>
    <experiments>6</experiments>
</comment>
<comment type="interaction">
    <interactant intactId="EBI-930964">
        <id>P54253</id>
    </interactant>
    <interactant intactId="EBI-358489">
        <id>Q96GM5</id>
        <label>SMARCD1</label>
    </interactant>
    <organismsDiffer>false</organismsDiffer>
    <experiments>6</experiments>
</comment>
<comment type="interaction">
    <interactant intactId="EBI-930964">
        <id>P54253</id>
    </interactant>
    <interactant intactId="EBI-490676">
        <id>O95721</id>
        <label>SNAP29</label>
    </interactant>
    <organismsDiffer>false</organismsDiffer>
    <experiments>3</experiments>
</comment>
<comment type="interaction">
    <interactant intactId="EBI-930964">
        <id>P54253</id>
    </interactant>
    <interactant intactId="EBI-538492">
        <id>Q96DI7</id>
        <label>SNRNP40</label>
    </interactant>
    <organismsDiffer>false</organismsDiffer>
    <experiments>3</experiments>
</comment>
<comment type="interaction">
    <interactant intactId="EBI-930964">
        <id>P54253</id>
    </interactant>
    <interactant intactId="EBI-372458">
        <id>P14678</id>
        <label>SNRPB</label>
    </interactant>
    <organismsDiffer>false</organismsDiffer>
    <experiments>3</experiments>
</comment>
<comment type="interaction">
    <interactant intactId="EBI-930964">
        <id>P54253</id>
    </interactant>
    <interactant intactId="EBI-297993">
        <id>P62316</id>
        <label>SNRPD2</label>
    </interactant>
    <organismsDiffer>false</organismsDiffer>
    <experiments>3</experiments>
</comment>
<comment type="interaction">
    <interactant intactId="EBI-930964">
        <id>P54253</id>
    </interactant>
    <interactant intactId="EBI-372789">
        <id>P62318</id>
        <label>SNRPD3</label>
    </interactant>
    <organismsDiffer>false</organismsDiffer>
    <experiments>3</experiments>
</comment>
<comment type="interaction">
    <interactant intactId="EBI-930964">
        <id>P54253</id>
    </interactant>
    <interactant intactId="EBI-7484437">
        <id>Q9UPU3</id>
        <label>SORCS3</label>
    </interactant>
    <organismsDiffer>false</organismsDiffer>
    <experiments>3</experiments>
</comment>
<comment type="interaction">
    <interactant intactId="EBI-930964">
        <id>P54253</id>
    </interactant>
    <interactant intactId="EBI-9087806">
        <id>O95416</id>
        <label>SOX14</label>
    </interactant>
    <organismsDiffer>false</organismsDiffer>
    <experiments>3</experiments>
</comment>
<comment type="interaction">
    <interactant intactId="EBI-930964">
        <id>P54253</id>
    </interactant>
    <interactant intactId="EBI-9078386">
        <id>P41225</id>
        <label>SOX3</label>
    </interactant>
    <organismsDiffer>false</organismsDiffer>
    <experiments>3</experiments>
</comment>
<comment type="interaction">
    <interactant intactId="EBI-930964">
        <id>P54253</id>
    </interactant>
    <interactant intactId="EBI-11959123">
        <id>Q99932-2</id>
        <label>SPAG8</label>
    </interactant>
    <organismsDiffer>false</organismsDiffer>
    <experiments>6</experiments>
</comment>
<comment type="interaction">
    <interactant intactId="EBI-930964">
        <id>P54253</id>
    </interactant>
    <interactant intactId="EBI-2510414">
        <id>Q8IUW3</id>
        <label>SPATA2L</label>
    </interactant>
    <organismsDiffer>false</organismsDiffer>
    <experiments>3</experiments>
</comment>
<comment type="interaction">
    <interactant intactId="EBI-930964">
        <id>P54253</id>
    </interactant>
    <interactant intactId="EBI-6166040">
        <id>P61009</id>
        <label>SPCS3</label>
    </interactant>
    <organismsDiffer>false</organismsDiffer>
    <experiments>4</experiments>
</comment>
<comment type="interaction">
    <interactant intactId="EBI-930964">
        <id>P54253</id>
    </interactant>
    <interactant intactId="EBI-307104">
        <id>Q13501</id>
        <label>SQSTM1</label>
    </interactant>
    <organismsDiffer>false</organismsDiffer>
    <experiments>4</experiments>
</comment>
<comment type="interaction">
    <interactant intactId="EBI-930964">
        <id>P54253</id>
    </interactant>
    <interactant intactId="EBI-948313">
        <id>P36956</id>
        <label>SREBF1</label>
    </interactant>
    <organismsDiffer>false</organismsDiffer>
    <experiments>5</experiments>
</comment>
<comment type="interaction">
    <interactant intactId="EBI-930964">
        <id>P54253</id>
    </interactant>
    <interactant intactId="EBI-949146">
        <id>Q969X2</id>
        <label>ST6GALNAC6</label>
    </interactant>
    <organismsDiffer>false</organismsDiffer>
    <experiments>7</experiments>
</comment>
<comment type="interaction">
    <interactant intactId="EBI-930964">
        <id>P54253</id>
    </interactant>
    <interactant intactId="EBI-948802">
        <id>Q6ZMT1</id>
        <label>STAC2</label>
    </interactant>
    <organismsDiffer>false</organismsDiffer>
    <experiments>4</experiments>
</comment>
<comment type="interaction">
    <interactant intactId="EBI-930964">
        <id>P54253</id>
    </interactant>
    <interactant intactId="EBI-373258">
        <id>O75886</id>
        <label>STAM2</label>
    </interactant>
    <organismsDiffer>false</organismsDiffer>
    <experiments>8</experiments>
</comment>
<comment type="interaction">
    <interactant intactId="EBI-930964">
        <id>P54253</id>
    </interactant>
    <interactant intactId="EBI-396676">
        <id>O95630</id>
        <label>STAMBP</label>
    </interactant>
    <organismsDiffer>false</organismsDiffer>
    <experiments>6</experiments>
</comment>
<comment type="interaction">
    <interactant intactId="EBI-930964">
        <id>P54253</id>
    </interactant>
    <interactant intactId="EBI-474067">
        <id>P55854</id>
        <label>SUMO3</label>
    </interactant>
    <organismsDiffer>false</organismsDiffer>
    <experiments>6</experiments>
</comment>
<comment type="interaction">
    <interactant intactId="EBI-930964">
        <id>P54253</id>
    </interactant>
    <interactant intactId="EBI-946984">
        <id>Q8NEM7</id>
        <label>SUPT20H</label>
    </interactant>
    <organismsDiffer>false</organismsDiffer>
    <experiments>7</experiments>
</comment>
<comment type="interaction">
    <interactant intactId="EBI-930964">
        <id>P54253</id>
    </interactant>
    <interactant intactId="EBI-948293">
        <id>Q9NX95</id>
        <label>SYBU</label>
    </interactant>
    <organismsDiffer>false</organismsDiffer>
    <experiments>3</experiments>
</comment>
<comment type="interaction">
    <interactant intactId="EBI-930964">
        <id>P54253</id>
    </interactant>
    <interactant intactId="EBI-12816095">
        <id>Q9NX95-5</id>
        <label>SYBU</label>
    </interactant>
    <organismsDiffer>false</organismsDiffer>
    <experiments>6</experiments>
</comment>
<comment type="interaction">
    <interactant intactId="EBI-930964">
        <id>P54253</id>
    </interactant>
    <interactant intactId="EBI-742381">
        <id>Q92609</id>
        <label>TBC1D5</label>
    </interactant>
    <organismsDiffer>false</organismsDiffer>
    <experiments>2</experiments>
</comment>
<comment type="interaction">
    <interactant intactId="EBI-930964">
        <id>P54253</id>
    </interactant>
    <interactant intactId="EBI-765729">
        <id>Q9BZK7</id>
        <label>TBL1XR1</label>
    </interactant>
    <organismsDiffer>false</organismsDiffer>
    <experiments>6</experiments>
</comment>
<comment type="interaction">
    <interactant intactId="EBI-930964">
        <id>P54253</id>
    </interactant>
    <interactant intactId="EBI-1047158">
        <id>Q16650</id>
        <label>TBR1</label>
    </interactant>
    <organismsDiffer>false</organismsDiffer>
    <experiments>7</experiments>
</comment>
<comment type="interaction">
    <interactant intactId="EBI-930964">
        <id>P54253</id>
    </interactant>
    <interactant intactId="EBI-10191361">
        <id>Q96SF7</id>
        <label>TBX15</label>
    </interactant>
    <organismsDiffer>false</organismsDiffer>
    <experiments>3</experiments>
</comment>
<comment type="interaction">
    <interactant intactId="EBI-930964">
        <id>P54253</id>
    </interactant>
    <interactant intactId="EBI-6427217">
        <id>Q9Y458</id>
        <label>TBX22</label>
    </interactant>
    <organismsDiffer>false</organismsDiffer>
    <experiments>3</experiments>
</comment>
<comment type="interaction">
    <interactant intactId="EBI-930964">
        <id>P54253</id>
    </interactant>
    <interactant intactId="EBI-954089">
        <id>O15273</id>
        <label>TCAP</label>
    </interactant>
    <organismsDiffer>false</organismsDiffer>
    <experiments>8</experiments>
</comment>
<comment type="interaction">
    <interactant intactId="EBI-930964">
        <id>P54253</id>
    </interactant>
    <interactant intactId="EBI-11955057">
        <id>Q8N8B7-2</id>
        <label>TCEANC</label>
    </interactant>
    <organismsDiffer>false</organismsDiffer>
    <experiments>3</experiments>
</comment>
<comment type="interaction">
    <interactant intactId="EBI-930964">
        <id>P54253</id>
    </interactant>
    <interactant intactId="EBI-12151837">
        <id>P28347-2</id>
        <label>TEAD1</label>
    </interactant>
    <organismsDiffer>false</organismsDiffer>
    <experiments>3</experiments>
</comment>
<comment type="interaction">
    <interactant intactId="EBI-930964">
        <id>P54253</id>
    </interactant>
    <interactant intactId="EBI-954084">
        <id>Q96IP4</id>
        <label>TENT5A</label>
    </interactant>
    <organismsDiffer>false</organismsDiffer>
    <experiments>5</experiments>
</comment>
<comment type="interaction">
    <interactant intactId="EBI-930964">
        <id>P54253</id>
    </interactant>
    <interactant intactId="EBI-752030">
        <id>Q96A09</id>
        <label>TENT5B</label>
    </interactant>
    <organismsDiffer>false</organismsDiffer>
    <experiments>11</experiments>
</comment>
<comment type="interaction">
    <interactant intactId="EBI-930964">
        <id>P54253</id>
    </interactant>
    <interactant intactId="EBI-25840535">
        <id>Q15554-4</id>
        <label>TERF2</label>
    </interactant>
    <organismsDiffer>false</organismsDiffer>
    <experiments>6</experiments>
</comment>
<comment type="interaction">
    <interactant intactId="EBI-930964">
        <id>P54253</id>
    </interactant>
    <interactant intactId="EBI-296151">
        <id>P37173</id>
        <label>TGFBR2</label>
    </interactant>
    <organismsDiffer>false</organismsDiffer>
    <experiments>3</experiments>
</comment>
<comment type="interaction">
    <interactant intactId="EBI-930964">
        <id>P54253</id>
    </interactant>
    <interactant intactId="EBI-717810">
        <id>Q08117</id>
        <label>TLE5</label>
    </interactant>
    <organismsDiffer>false</organismsDiffer>
    <experiments>3</experiments>
</comment>
<comment type="interaction">
    <interactant intactId="EBI-930964">
        <id>P54253</id>
    </interactant>
    <interactant intactId="EBI-12921610">
        <id>Q9NV96-2</id>
        <label>TMEM30A</label>
    </interactant>
    <organismsDiffer>false</organismsDiffer>
    <experiments>6</experiments>
</comment>
<comment type="interaction">
    <interactant intactId="EBI-930964">
        <id>P54253</id>
    </interactant>
    <interactant intactId="EBI-25831574">
        <id>Q71RG4-4</id>
        <label>TMUB2</label>
    </interactant>
    <organismsDiffer>false</organismsDiffer>
    <experiments>3</experiments>
</comment>
<comment type="interaction">
    <interactant intactId="EBI-930964">
        <id>P54253</id>
    </interactant>
    <interactant intactId="EBI-2505861">
        <id>Q13829</id>
        <label>TNFAIP1</label>
    </interactant>
    <organismsDiffer>false</organismsDiffer>
    <experiments>3</experiments>
</comment>
<comment type="interaction">
    <interactant intactId="EBI-930964">
        <id>P54253</id>
    </interactant>
    <interactant intactId="EBI-74615">
        <id>Q9H0E2</id>
        <label>TOLLIP</label>
    </interactant>
    <organismsDiffer>false</organismsDiffer>
    <experiments>7</experiments>
</comment>
<comment type="interaction">
    <interactant intactId="EBI-930964">
        <id>P54253</id>
    </interactant>
    <interactant intactId="EBI-948613">
        <id>O94842</id>
        <label>TOX4</label>
    </interactant>
    <organismsDiffer>false</organismsDiffer>
    <experiments>7</experiments>
</comment>
<comment type="interaction">
    <interactant intactId="EBI-930964">
        <id>P54253</id>
    </interactant>
    <interactant intactId="EBI-355607">
        <id>P06753</id>
        <label>TPM3</label>
    </interactant>
    <organismsDiffer>false</organismsDiffer>
    <experiments>4</experiments>
</comment>
<comment type="interaction">
    <interactant intactId="EBI-930964">
        <id>P54253</id>
    </interactant>
    <interactant intactId="EBI-10977875">
        <id>P06753-2</id>
        <label>TPM3</label>
    </interactant>
    <organismsDiffer>false</organismsDiffer>
    <experiments>3</experiments>
</comment>
<comment type="interaction">
    <interactant intactId="EBI-930964">
        <id>P54253</id>
    </interactant>
    <interactant intactId="EBI-14115717">
        <id>Q8N7U7-2</id>
        <label>TPRX1</label>
    </interactant>
    <organismsDiffer>false</organismsDiffer>
    <experiments>3</experiments>
</comment>
<comment type="interaction">
    <interactant intactId="EBI-930964">
        <id>P54253</id>
    </interactant>
    <interactant intactId="EBI-355744">
        <id>Q12933</id>
        <label>TRAF2</label>
    </interactant>
    <organismsDiffer>false</organismsDiffer>
    <experiments>14</experiments>
</comment>
<comment type="interaction">
    <interactant intactId="EBI-930964">
        <id>P54253</id>
    </interactant>
    <interactant intactId="EBI-740098">
        <id>P36406</id>
        <label>TRIM23</label>
    </interactant>
    <organismsDiffer>false</organismsDiffer>
    <experiments>6</experiments>
</comment>
<comment type="interaction">
    <interactant intactId="EBI-930964">
        <id>P54253</id>
    </interactant>
    <interactant intactId="EBI-742790">
        <id>Q13049</id>
        <label>TRIM32</label>
    </interactant>
    <organismsDiffer>false</organismsDiffer>
    <experiments>5</experiments>
</comment>
<comment type="interaction">
    <interactant intactId="EBI-930964">
        <id>P54253</id>
    </interactant>
    <interactant intactId="EBI-2130415">
        <id>O00635</id>
        <label>TRIM38</label>
    </interactant>
    <organismsDiffer>false</organismsDiffer>
    <experiments>5</experiments>
</comment>
<comment type="interaction">
    <interactant intactId="EBI-930964">
        <id>P54253</id>
    </interactant>
    <interactant intactId="EBI-25843781">
        <id>L8E9Q5</id>
        <label>TRIM65</label>
    </interactant>
    <organismsDiffer>false</organismsDiffer>
    <experiments>6</experiments>
</comment>
<comment type="interaction">
    <interactant intactId="EBI-930964">
        <id>P54253</id>
    </interactant>
    <interactant intactId="EBI-11525489">
        <id>Q86WT6-2</id>
        <label>TRIM69</label>
    </interactant>
    <organismsDiffer>false</organismsDiffer>
    <experiments>6</experiments>
</comment>
<comment type="interaction">
    <interactant intactId="EBI-930964">
        <id>P54253</id>
    </interactant>
    <interactant intactId="EBI-10259086">
        <id>Q86UV6-2</id>
        <label>TRIM74</label>
    </interactant>
    <organismsDiffer>false</organismsDiffer>
    <experiments>6</experiments>
</comment>
<comment type="interaction">
    <interactant intactId="EBI-930964">
        <id>P54253</id>
    </interactant>
    <interactant intactId="EBI-720828">
        <id>Q9C026</id>
        <label>TRIM9</label>
    </interactant>
    <organismsDiffer>false</organismsDiffer>
    <experiments>6</experiments>
</comment>
<comment type="interaction">
    <interactant intactId="EBI-930964">
        <id>P54253</id>
    </interactant>
    <interactant intactId="EBI-742327">
        <id>Q15654</id>
        <label>TRIP6</label>
    </interactant>
    <organismsDiffer>false</organismsDiffer>
    <experiments>7</experiments>
</comment>
<comment type="interaction">
    <interactant intactId="EBI-930964">
        <id>P54253</id>
    </interactant>
    <interactant intactId="EBI-12806590">
        <id>Q86WV8</id>
        <label>TSC1</label>
    </interactant>
    <organismsDiffer>false</organismsDiffer>
    <experiments>3</experiments>
</comment>
<comment type="interaction">
    <interactant intactId="EBI-930964">
        <id>P54253</id>
    </interactant>
    <interactant intactId="EBI-948354">
        <id>Q6DKK2</id>
        <label>TTC19</label>
    </interactant>
    <organismsDiffer>false</organismsDiffer>
    <experiments>7</experiments>
</comment>
<comment type="interaction">
    <interactant intactId="EBI-930964">
        <id>P54253</id>
    </interactant>
    <interactant intactId="EBI-1797313">
        <id>Q8WVJ9</id>
        <label>TWIST2</label>
    </interactant>
    <organismsDiffer>false</organismsDiffer>
    <experiments>6</experiments>
</comment>
<comment type="interaction">
    <interactant intactId="EBI-930964">
        <id>P54253</id>
    </interactant>
    <interactant intactId="EBI-632461">
        <id>Q01081</id>
        <label>U2AF1</label>
    </interactant>
    <organismsDiffer>false</organismsDiffer>
    <experiments>4</experiments>
</comment>
<comment type="interaction">
    <interactant intactId="EBI-930964">
        <id>P54253</id>
    </interactant>
    <interactant intactId="EBI-742339">
        <id>P26368</id>
        <label>U2AF2</label>
    </interactant>
    <organismsDiffer>false</organismsDiffer>
    <experiments>5</experiments>
</comment>
<comment type="interaction">
    <interactant intactId="EBI-930964">
        <id>P54253</id>
    </interactant>
    <interactant intactId="EBI-749370">
        <id>Q9BSL1</id>
        <label>UBAC1</label>
    </interactant>
    <organismsDiffer>false</organismsDiffer>
    <experiments>6</experiments>
</comment>
<comment type="interaction">
    <interactant intactId="EBI-930964">
        <id>P54253</id>
    </interactant>
    <interactant intactId="EBI-348496">
        <id>Q969T4</id>
        <label>UBE2E3</label>
    </interactant>
    <organismsDiffer>false</organismsDiffer>
    <experiments>7</experiments>
</comment>
<comment type="interaction">
    <interactant intactId="EBI-930964">
        <id>P54253</id>
    </interactant>
    <interactant intactId="EBI-80168">
        <id>P63279</id>
        <label>UBE2I</label>
    </interactant>
    <organismsDiffer>false</organismsDiffer>
    <experiments>7</experiments>
</comment>
<comment type="interaction">
    <interactant intactId="EBI-930964">
        <id>P54253</id>
    </interactant>
    <interactant intactId="EBI-10180829">
        <id>Q7KZS0</id>
        <label>UBE2I</label>
    </interactant>
    <organismsDiffer>false</organismsDiffer>
    <experiments>3</experiments>
</comment>
<comment type="interaction">
    <interactant intactId="EBI-930964">
        <id>P54253</id>
    </interactant>
    <interactant intactId="EBI-1050671">
        <id>Q13404</id>
        <label>UBE2V1</label>
    </interactant>
    <organismsDiffer>false</organismsDiffer>
    <experiments>6</experiments>
</comment>
<comment type="interaction">
    <interactant intactId="EBI-930964">
        <id>P54253</id>
    </interactant>
    <interactant intactId="EBI-751901">
        <id>O94941</id>
        <label>UBOX5</label>
    </interactant>
    <organismsDiffer>false</organismsDiffer>
    <experiments>6</experiments>
</comment>
<comment type="interaction">
    <interactant intactId="EBI-930964">
        <id>P54253</id>
    </interactant>
    <interactant intactId="EBI-711226">
        <id>Q9NRR5</id>
        <label>UBQLN4</label>
    </interactant>
    <organismsDiffer>false</organismsDiffer>
    <experiments>6</experiments>
</comment>
<comment type="interaction">
    <interactant intactId="EBI-930964">
        <id>P54253</id>
    </interactant>
    <interactant intactId="EBI-10696113">
        <id>O75604-3</id>
        <label>USP2</label>
    </interactant>
    <organismsDiffer>false</organismsDiffer>
    <experiments>6</experiments>
</comment>
<comment type="interaction">
    <interactant intactId="EBI-930964">
        <id>P54253</id>
    </interactant>
    <interactant intactId="EBI-2512374">
        <id>Q70CQ3</id>
        <label>USP30</label>
    </interactant>
    <organismsDiffer>false</organismsDiffer>
    <experiments>3</experiments>
</comment>
<comment type="interaction">
    <interactant intactId="EBI-930964">
        <id>P54253</id>
    </interactant>
    <interactant intactId="EBI-2512753">
        <id>P62068</id>
        <label>USP46</label>
    </interactant>
    <organismsDiffer>false</organismsDiffer>
    <experiments>6</experiments>
</comment>
<comment type="interaction">
    <interactant intactId="EBI-930964">
        <id>P54253</id>
    </interactant>
    <interactant intactId="EBI-946185">
        <id>Q70EL1</id>
        <label>USP54</label>
    </interactant>
    <organismsDiffer>false</organismsDiffer>
    <experiments>3</experiments>
</comment>
<comment type="interaction">
    <interactant intactId="EBI-930964">
        <id>P54253</id>
    </interactant>
    <interactant intactId="EBI-11975223">
        <id>Q70EL1-9</id>
        <label>USP54</label>
    </interactant>
    <organismsDiffer>false</organismsDiffer>
    <experiments>6</experiments>
</comment>
<comment type="interaction">
    <interactant intactId="EBI-930964">
        <id>P54253</id>
    </interactant>
    <interactant intactId="EBI-355164">
        <id>P55072</id>
        <label>VCP</label>
    </interactant>
    <organismsDiffer>false</organismsDiffer>
    <experiments>3</experiments>
</comment>
<comment type="interaction">
    <interactant intactId="EBI-930964">
        <id>P54253</id>
    </interactant>
    <interactant intactId="EBI-2514459">
        <id>O75351</id>
        <label>VPS4B</label>
    </interactant>
    <organismsDiffer>false</organismsDiffer>
    <experiments>3</experiments>
</comment>
<comment type="interaction">
    <interactant intactId="EBI-930964">
        <id>P54253</id>
    </interactant>
    <interactant intactId="EBI-740943">
        <id>P62760</id>
        <label>VSNL1</label>
    </interactant>
    <organismsDiffer>false</organismsDiffer>
    <experiments>7</experiments>
</comment>
<comment type="interaction">
    <interactant intactId="EBI-930964">
        <id>P54253</id>
    </interactant>
    <interactant intactId="EBI-948213">
        <id>Q96N03</id>
        <label>VSTM2L</label>
    </interactant>
    <organismsDiffer>false</organismsDiffer>
    <experiments>9</experiments>
</comment>
<comment type="interaction">
    <interactant intactId="EBI-930964">
        <id>P54253</id>
    </interactant>
    <interactant intactId="EBI-7705033">
        <id>Q9BRX9</id>
        <label>WDR83</label>
    </interactant>
    <organismsDiffer>false</organismsDiffer>
    <experiments>6</experiments>
</comment>
<comment type="interaction">
    <interactant intactId="EBI-930964">
        <id>P54253</id>
    </interactant>
    <interactant intactId="EBI-359815">
        <id>P31946</id>
        <label>YWHAB</label>
    </interactant>
    <organismsDiffer>false</organismsDiffer>
    <experiments>5</experiments>
</comment>
<comment type="interaction">
    <interactant intactId="EBI-930964">
        <id>P54253</id>
    </interactant>
    <interactant intactId="EBI-356498">
        <id>P62258</id>
        <label>YWHAE</label>
    </interactant>
    <organismsDiffer>false</organismsDiffer>
    <experiments>10</experiments>
</comment>
<comment type="interaction">
    <interactant intactId="EBI-930964">
        <id>P54253</id>
    </interactant>
    <interactant intactId="EBI-306940">
        <id>Q04917</id>
        <label>YWHAH</label>
    </interactant>
    <organismsDiffer>false</organismsDiffer>
    <experiments>10</experiments>
</comment>
<comment type="interaction">
    <interactant intactId="EBI-930964">
        <id>P54253</id>
    </interactant>
    <interactant intactId="EBI-359854">
        <id>P27348</id>
        <label>YWHAQ</label>
    </interactant>
    <organismsDiffer>false</organismsDiffer>
    <experiments>5</experiments>
</comment>
<comment type="interaction">
    <interactant intactId="EBI-930964">
        <id>P54253</id>
    </interactant>
    <interactant intactId="EBI-347088">
        <id>P63104</id>
        <label>YWHAZ</label>
    </interactant>
    <organismsDiffer>false</organismsDiffer>
    <experiments>9</experiments>
</comment>
<comment type="interaction">
    <interactant intactId="EBI-930964">
        <id>P54253</id>
    </interactant>
    <interactant intactId="EBI-946122">
        <id>Q9H869</id>
        <label>YY1AP1</label>
    </interactant>
    <organismsDiffer>false</organismsDiffer>
    <experiments>4</experiments>
</comment>
<comment type="interaction">
    <interactant intactId="EBI-930964">
        <id>P54253</id>
    </interactant>
    <interactant intactId="EBI-12150045">
        <id>Q9H869-2</id>
        <label>YY1AP1</label>
    </interactant>
    <organismsDiffer>false</organismsDiffer>
    <experiments>15</experiments>
</comment>
<comment type="interaction">
    <interactant intactId="EBI-930964">
        <id>P54253</id>
    </interactant>
    <interactant intactId="EBI-10188476">
        <id>A0A0C4DGF1</id>
        <label>ZBTB32</label>
    </interactant>
    <organismsDiffer>false</organismsDiffer>
    <experiments>3</experiments>
</comment>
<comment type="interaction">
    <interactant intactId="EBI-930964">
        <id>P54253</id>
    </interactant>
    <interactant intactId="EBI-740718">
        <id>O43298</id>
        <label>ZBTB43</label>
    </interactant>
    <organismsDiffer>false</organismsDiffer>
    <experiments>7</experiments>
</comment>
<comment type="interaction">
    <interactant intactId="EBI-930964">
        <id>P54253</id>
    </interactant>
    <interactant intactId="EBI-742550">
        <id>Q96K80</id>
        <label>ZC3H10</label>
    </interactant>
    <organismsDiffer>false</organismsDiffer>
    <experiments>7</experiments>
</comment>
<comment type="interaction">
    <interactant intactId="EBI-930964">
        <id>P54253</id>
    </interactant>
    <interactant intactId="EBI-25894765">
        <id>Q86WB0-2</id>
        <label>ZC3HC1</label>
    </interactant>
    <organismsDiffer>false</organismsDiffer>
    <experiments>6</experiments>
</comment>
<comment type="interaction">
    <interactant intactId="EBI-930964">
        <id>P54253</id>
    </interactant>
    <interactant intactId="EBI-347767">
        <id>Q9UKY1</id>
        <label>ZHX1</label>
    </interactant>
    <organismsDiffer>false</organismsDiffer>
    <experiments>11</experiments>
</comment>
<comment type="interaction">
    <interactant intactId="EBI-930964">
        <id>P54253</id>
    </interactant>
    <interactant intactId="EBI-10693326">
        <id>Q9H4I2-2</id>
        <label>ZHX3</label>
    </interactant>
    <organismsDiffer>false</organismsDiffer>
    <experiments>6</experiments>
</comment>
<comment type="interaction">
    <interactant intactId="EBI-930964">
        <id>P54253</id>
    </interactant>
    <interactant intactId="EBI-2682299">
        <id>Q96NC0</id>
        <label>ZMAT2</label>
    </interactant>
    <organismsDiffer>false</organismsDiffer>
    <experiments>6</experiments>
</comment>
<comment type="interaction">
    <interactant intactId="EBI-930964">
        <id>P54253</id>
    </interactant>
    <interactant intactId="EBI-12949277">
        <id>O95789-4</id>
        <label>ZMYM6</label>
    </interactant>
    <organismsDiffer>false</organismsDiffer>
    <experiments>6</experiments>
</comment>
<comment type="interaction">
    <interactant intactId="EBI-930964">
        <id>P54253</id>
    </interactant>
    <interactant intactId="EBI-750821">
        <id>Q8N554</id>
        <label>ZNF276</label>
    </interactant>
    <organismsDiffer>false</organismsDiffer>
    <experiments>4</experiments>
</comment>
<comment type="interaction">
    <interactant intactId="EBI-930964">
        <id>P54253</id>
    </interactant>
    <interactant intactId="EBI-2813661">
        <id>Q8N895</id>
        <label>ZNF366</label>
    </interactant>
    <organismsDiffer>false</organismsDiffer>
    <experiments>6</experiments>
</comment>
<comment type="interaction">
    <interactant intactId="EBI-930964">
        <id>P54253</id>
    </interactant>
    <interactant intactId="EBI-948288">
        <id>Q96MN9</id>
        <label>ZNF488</label>
    </interactant>
    <organismsDiffer>false</organismsDiffer>
    <experiments>9</experiments>
</comment>
<comment type="interaction">
    <interactant intactId="EBI-930964">
        <id>P54253</id>
    </interactant>
    <interactant intactId="EBI-25831733">
        <id>Q96MN9-2</id>
        <label>ZNF488</label>
    </interactant>
    <organismsDiffer>false</organismsDiffer>
    <experiments>6</experiments>
</comment>
<comment type="interaction">
    <interactant intactId="EBI-930964">
        <id>P54253</id>
    </interactant>
    <interactant intactId="EBI-10699005">
        <id>Q8N988-2</id>
        <label>ZNF557</label>
    </interactant>
    <organismsDiffer>false</organismsDiffer>
    <experiments>3</experiments>
</comment>
<comment type="interaction">
    <interactant intactId="EBI-930964">
        <id>P54253</id>
    </interactant>
    <interactant intactId="EBI-12021938">
        <id>Q8NBB4-2</id>
        <label>ZSCAN1</label>
    </interactant>
    <organismsDiffer>false</organismsDiffer>
    <experiments>6</experiments>
</comment>
<comment type="interaction">
    <interactant intactId="EBI-930964">
        <id>P54253</id>
    </interactant>
    <interactant intactId="EBI-1538838">
        <id>Q2QGD7</id>
        <label>ZXDC</label>
    </interactant>
    <organismsDiffer>false</organismsDiffer>
    <experiments>7</experiments>
</comment>
<comment type="interaction">
    <interactant intactId="EBI-930964">
        <id>P54253</id>
    </interactant>
    <interactant intactId="EBI-10307430">
        <id>Q9H669</id>
    </interactant>
    <organismsDiffer>false</organismsDiffer>
    <experiments>3</experiments>
</comment>
<comment type="interaction">
    <interactant intactId="EBI-930964">
        <id>P54253</id>
    </interactant>
    <interactant intactId="EBI-25900580">
        <id>Q9Y649</id>
    </interactant>
    <organismsDiffer>false</organismsDiffer>
    <experiments>3</experiments>
</comment>
<comment type="interaction">
    <interactant intactId="EBI-930975">
        <id>P54253-1</id>
    </interactant>
    <interactant intactId="EBI-945751">
        <id>P38432</id>
        <label>COIL</label>
    </interactant>
    <organismsDiffer>false</organismsDiffer>
    <experiments>6</experiments>
</comment>
<comment type="subcellular location">
    <subcellularLocation>
        <location evidence="14">Cytoplasm</location>
    </subcellularLocation>
    <subcellularLocation>
        <location evidence="7 14">Nucleus</location>
    </subcellularLocation>
    <text evidence="7">Colocalizes with USP7 in the nucleus.</text>
</comment>
<comment type="alternative products">
    <event type="alternative splicing"/>
    <isoform>
        <id>P54253-1</id>
        <name>1</name>
        <sequence type="displayed"/>
    </isoform>
    <text>At least 2 isoforms are produced.</text>
</comment>
<comment type="tissue specificity">
    <text evidence="6">Widely expressed throughout the body.</text>
</comment>
<comment type="induction">
    <text evidence="13">ATXN1 protein levels are directly regulated by PUM1 protein: PUM1 acts by binding to the 3'-UTR of ATXN1 mRNA, affecting ATXN1 mRNA stability and leading to reduced ATXN1 protein levels.</text>
</comment>
<comment type="domain">
    <text evidence="1">The AXH domain is required for interaction with CIC.</text>
</comment>
<comment type="PTM">
    <text evidence="1">Ubiquitinated by UBE3A, leading to its degradation by the proteasome. The presence of expanded poly-Gln repeats in spinocerebellar ataxia 1 (SCA1) patients impairs ubiquitination and degradation, leading to accumulation of ATXN1 in neurons and subsequent toxicity.</text>
</comment>
<comment type="PTM">
    <text evidence="8">Phosphorylation at Ser-775 increases the pathogenicity of proteins with an expanded polyglutamine tract.</text>
</comment>
<comment type="PTM">
    <text evidence="8 10">Sumoylation is dependent on nuclear localization and phosphorylation at Ser-775. It is reduced in the presence of an expanded polyglutamine tract.</text>
</comment>
<comment type="polymorphism">
    <text evidence="16">The poly-Gln region of ATXN1 is highly polymorphic (4 to 39 repeats) in the normal population and is expanded to about 40-83 repeats in spinocerebellar ataxia 1 (SCA1) patients.</text>
</comment>
<comment type="disease" evidence="14 15 16">
    <disease id="DI-01066">
        <name>Spinocerebellar ataxia 1</name>
        <acronym>SCA1</acronym>
        <description>Spinocerebellar ataxia is a clinically and genetically heterogeneous group of cerebellar disorders. Patients show progressive incoordination of gait and often poor coordination of hands, speech and eye movements, due to cerebellum degeneration with variable involvement of the brainstem and spinal cord. SCA1 belongs to the autosomal dominant cerebellar ataxias type I (ADCA I) which are characterized by cerebellar ataxia in combination with additional clinical features like optic atrophy, ophthalmoplegia, bulbar and extrapyramidal signs, peripheral neuropathy and dementia. SCA1 is caused by expansion of a CAG repeat in the coding region of ATXN1. Longer expansions result in earlier onset and more severe clinical manifestations of the disease.</description>
        <dbReference type="MIM" id="164400"/>
    </disease>
    <text evidence="14 16">The disease is caused by variants affecting the gene represented in this entry. The disease is caused by expansion of the polyglutamine tract to about 40-83 repeats, causing accumulation in neurons and exerting toxicity.</text>
</comment>
<comment type="miscellaneous">
    <text>Self-association seems to be necessary for formation of nuclear aggregates which are associated with pathogenesis.</text>
</comment>
<comment type="similarity">
    <text evidence="19">Belongs to the ATXN1 family.</text>
</comment>
<comment type="online information" name="Wikipedia">
    <link uri="https://en.wikipedia.org/wiki/Ataxin_1"/>
    <text>Ataxin-1 entry</text>
</comment>
<protein>
    <recommendedName>
        <fullName>Ataxin-1</fullName>
    </recommendedName>
    <alternativeName>
        <fullName>Spinocerebellar ataxia type 1 protein</fullName>
    </alternativeName>
</protein>
<name>ATX1_HUMAN</name>
<reference key="1">
    <citation type="journal article" date="1994" name="Nat. Genet.">
        <title>Identification and characterization of the gene causing type 1 spinocerebellar ataxia.</title>
        <authorList>
            <person name="Banfi S."/>
            <person name="Servadio A."/>
            <person name="Chung M.-Y."/>
            <person name="Kwiatkowski T.J. Jr."/>
            <person name="McCall A.E."/>
            <person name="Duvick L.A."/>
            <person name="Shen Y."/>
            <person name="Roth E.J."/>
            <person name="Orr H.T."/>
            <person name="Zoghbi H.Y."/>
        </authorList>
    </citation>
    <scope>NUCLEOTIDE SEQUENCE [MRNA]</scope>
    <scope>INVOLVEMENT IN SCA1</scope>
    <scope>TISSUE SPECIFICITY</scope>
    <source>
        <tissue>Brain</tissue>
        <tissue>Cerebellum</tissue>
    </source>
</reference>
<reference key="2">
    <citation type="journal article" date="2003" name="Nature">
        <title>The DNA sequence and analysis of human chromosome 6.</title>
        <authorList>
            <person name="Mungall A.J."/>
            <person name="Palmer S.A."/>
            <person name="Sims S.K."/>
            <person name="Edwards C.A."/>
            <person name="Ashurst J.L."/>
            <person name="Wilming L."/>
            <person name="Jones M.C."/>
            <person name="Horton R."/>
            <person name="Hunt S.E."/>
            <person name="Scott C.E."/>
            <person name="Gilbert J.G.R."/>
            <person name="Clamp M.E."/>
            <person name="Bethel G."/>
            <person name="Milne S."/>
            <person name="Ainscough R."/>
            <person name="Almeida J.P."/>
            <person name="Ambrose K.D."/>
            <person name="Andrews T.D."/>
            <person name="Ashwell R.I.S."/>
            <person name="Babbage A.K."/>
            <person name="Bagguley C.L."/>
            <person name="Bailey J."/>
            <person name="Banerjee R."/>
            <person name="Barker D.J."/>
            <person name="Barlow K.F."/>
            <person name="Bates K."/>
            <person name="Beare D.M."/>
            <person name="Beasley H."/>
            <person name="Beasley O."/>
            <person name="Bird C.P."/>
            <person name="Blakey S.E."/>
            <person name="Bray-Allen S."/>
            <person name="Brook J."/>
            <person name="Brown A.J."/>
            <person name="Brown J.Y."/>
            <person name="Burford D.C."/>
            <person name="Burrill W."/>
            <person name="Burton J."/>
            <person name="Carder C."/>
            <person name="Carter N.P."/>
            <person name="Chapman J.C."/>
            <person name="Clark S.Y."/>
            <person name="Clark G."/>
            <person name="Clee C.M."/>
            <person name="Clegg S."/>
            <person name="Cobley V."/>
            <person name="Collier R.E."/>
            <person name="Collins J.E."/>
            <person name="Colman L.K."/>
            <person name="Corby N.R."/>
            <person name="Coville G.J."/>
            <person name="Culley K.M."/>
            <person name="Dhami P."/>
            <person name="Davies J."/>
            <person name="Dunn M."/>
            <person name="Earthrowl M.E."/>
            <person name="Ellington A.E."/>
            <person name="Evans K.A."/>
            <person name="Faulkner L."/>
            <person name="Francis M.D."/>
            <person name="Frankish A."/>
            <person name="Frankland J."/>
            <person name="French L."/>
            <person name="Garner P."/>
            <person name="Garnett J."/>
            <person name="Ghori M.J."/>
            <person name="Gilby L.M."/>
            <person name="Gillson C.J."/>
            <person name="Glithero R.J."/>
            <person name="Grafham D.V."/>
            <person name="Grant M."/>
            <person name="Gribble S."/>
            <person name="Griffiths C."/>
            <person name="Griffiths M.N.D."/>
            <person name="Hall R."/>
            <person name="Halls K.S."/>
            <person name="Hammond S."/>
            <person name="Harley J.L."/>
            <person name="Hart E.A."/>
            <person name="Heath P.D."/>
            <person name="Heathcott R."/>
            <person name="Holmes S.J."/>
            <person name="Howden P.J."/>
            <person name="Howe K.L."/>
            <person name="Howell G.R."/>
            <person name="Huckle E."/>
            <person name="Humphray S.J."/>
            <person name="Humphries M.D."/>
            <person name="Hunt A.R."/>
            <person name="Johnson C.M."/>
            <person name="Joy A.A."/>
            <person name="Kay M."/>
            <person name="Keenan S.J."/>
            <person name="Kimberley A.M."/>
            <person name="King A."/>
            <person name="Laird G.K."/>
            <person name="Langford C."/>
            <person name="Lawlor S."/>
            <person name="Leongamornlert D.A."/>
            <person name="Leversha M."/>
            <person name="Lloyd C.R."/>
            <person name="Lloyd D.M."/>
            <person name="Loveland J.E."/>
            <person name="Lovell J."/>
            <person name="Martin S."/>
            <person name="Mashreghi-Mohammadi M."/>
            <person name="Maslen G.L."/>
            <person name="Matthews L."/>
            <person name="McCann O.T."/>
            <person name="McLaren S.J."/>
            <person name="McLay K."/>
            <person name="McMurray A."/>
            <person name="Moore M.J.F."/>
            <person name="Mullikin J.C."/>
            <person name="Niblett D."/>
            <person name="Nickerson T."/>
            <person name="Novik K.L."/>
            <person name="Oliver K."/>
            <person name="Overton-Larty E.K."/>
            <person name="Parker A."/>
            <person name="Patel R."/>
            <person name="Pearce A.V."/>
            <person name="Peck A.I."/>
            <person name="Phillimore B.J.C.T."/>
            <person name="Phillips S."/>
            <person name="Plumb R.W."/>
            <person name="Porter K.M."/>
            <person name="Ramsey Y."/>
            <person name="Ranby S.A."/>
            <person name="Rice C.M."/>
            <person name="Ross M.T."/>
            <person name="Searle S.M."/>
            <person name="Sehra H.K."/>
            <person name="Sheridan E."/>
            <person name="Skuce C.D."/>
            <person name="Smith S."/>
            <person name="Smith M."/>
            <person name="Spraggon L."/>
            <person name="Squares S.L."/>
            <person name="Steward C.A."/>
            <person name="Sycamore N."/>
            <person name="Tamlyn-Hall G."/>
            <person name="Tester J."/>
            <person name="Theaker A.J."/>
            <person name="Thomas D.W."/>
            <person name="Thorpe A."/>
            <person name="Tracey A."/>
            <person name="Tromans A."/>
            <person name="Tubby B."/>
            <person name="Wall M."/>
            <person name="Wallis J.M."/>
            <person name="West A.P."/>
            <person name="White S.S."/>
            <person name="Whitehead S.L."/>
            <person name="Whittaker H."/>
            <person name="Wild A."/>
            <person name="Willey D.J."/>
            <person name="Wilmer T.E."/>
            <person name="Wood J.M."/>
            <person name="Wray P.W."/>
            <person name="Wyatt J.C."/>
            <person name="Young L."/>
            <person name="Younger R.M."/>
            <person name="Bentley D.R."/>
            <person name="Coulson A."/>
            <person name="Durbin R.M."/>
            <person name="Hubbard T."/>
            <person name="Sulston J.E."/>
            <person name="Dunham I."/>
            <person name="Rogers J."/>
            <person name="Beck S."/>
        </authorList>
    </citation>
    <scope>NUCLEOTIDE SEQUENCE [LARGE SCALE GENOMIC DNA]</scope>
</reference>
<reference key="3">
    <citation type="journal article" date="2004" name="Genome Res.">
        <title>The status, quality, and expansion of the NIH full-length cDNA project: the Mammalian Gene Collection (MGC).</title>
        <authorList>
            <consortium name="The MGC Project Team"/>
        </authorList>
    </citation>
    <scope>NUCLEOTIDE SEQUENCE [LARGE SCALE MRNA]</scope>
    <source>
        <tissue>Brain</tissue>
    </source>
</reference>
<reference key="4">
    <citation type="journal article" date="1995" name="Hum. Mol. Genet.">
        <title>A novel CAG repeat configuration in the SCA1 gene: implications for the molecular diagnostics of spinocerebellar ataxia type 1.</title>
        <authorList>
            <person name="Quan F."/>
            <person name="Janas J."/>
            <person name="Popovich B.W."/>
        </authorList>
    </citation>
    <scope>NUCLEOTIDE SEQUENCE [GENOMIC DNA] OF 189-230</scope>
    <scope>INVOLVEMENT IN SCA1</scope>
    <scope>POLYMORPHISM</scope>
</reference>
<reference key="5">
    <citation type="journal article" date="1995" name="Nat. Genet.">
        <title>Expression analysis of the ataxin-1 protein in tissues from normal and spinocerebellar ataxia type 1 individuals.</title>
        <authorList>
            <person name="Servadio A."/>
            <person name="Koshy B."/>
            <person name="Armstrong D."/>
            <person name="Antalffy B."/>
            <person name="Orr H.T."/>
            <person name="Zoghbi H.Y."/>
        </authorList>
    </citation>
    <scope>INVOLVEMENT IN SCA1</scope>
    <scope>SUBCELLULAR LOCATION</scope>
</reference>
<reference key="6">
    <citation type="journal article" date="1997" name="Hum. Mol. Genet.">
        <title>Identification of a self-association region within the SCA1 gene product, ataxin-1.</title>
        <authorList>
            <person name="Burright E.N."/>
            <person name="Davidson J.D."/>
            <person name="Duvick L.A."/>
            <person name="Koshy B."/>
            <person name="Zoghbi H.Y."/>
            <person name="Orr H.T."/>
        </authorList>
    </citation>
    <scope>SUBUNIT</scope>
</reference>
<reference key="7">
    <citation type="journal article" date="1997" name="Nature">
        <title>The cerebellar leucine-rich acidic nuclear protein interacts with ataxin-1.</title>
        <authorList>
            <person name="Matilla A."/>
            <person name="Koshy B.T."/>
            <person name="Cummings C.J."/>
            <person name="Isobe T."/>
            <person name="Orr H.T."/>
            <person name="Zoghbi H.Y."/>
        </authorList>
    </citation>
    <scope>INTERACTION WITH ANP32A</scope>
</reference>
<reference key="8">
    <citation type="journal article" date="2001" name="Hum. Mol. Genet.">
        <title>The spinocerebellar ataxia type 1 protein, ataxin-1, has RNA-binding activity that is inversely affected by the length of its polyglutamine tract.</title>
        <authorList>
            <person name="Yue S."/>
            <person name="Serra H.G."/>
            <person name="Zoghbi H.Y."/>
            <person name="Orr H.T."/>
        </authorList>
    </citation>
    <scope>RNA-BINDING DOMAIN</scope>
</reference>
<reference key="9">
    <citation type="journal article" date="2000" name="Hum. Mol. Genet.">
        <title>Identification and characterization of an ataxin-1-interacting protein: A1Up, a ubiquitin-like nuclear protein.</title>
        <authorList>
            <person name="Davidson J.D."/>
            <person name="Riley B."/>
            <person name="Burright E.N."/>
            <person name="Duvick L.A."/>
            <person name="Zoghbi H.Y."/>
            <person name="Orr H.T."/>
        </authorList>
    </citation>
    <scope>INTERACTION WITH UBQLN4</scope>
</reference>
<reference key="10">
    <citation type="journal article" date="2002" name="Neuron">
        <title>Interaction between mutant ataxin-1 and PQBP-1 affects transcription and cell death.</title>
        <authorList>
            <person name="Okazawa H."/>
            <person name="Rich T."/>
            <person name="Chang A."/>
            <person name="Lin X."/>
            <person name="Waragai M."/>
            <person name="Kajikawa M."/>
            <person name="Enokido Y."/>
            <person name="Komuro A."/>
            <person name="Kato S."/>
            <person name="Shibata M."/>
            <person name="Hatanaka H."/>
            <person name="Mouradian M.M."/>
            <person name="Sudol M."/>
            <person name="Kanazawa I."/>
        </authorList>
    </citation>
    <scope>INTERACTION WITH PQBP1</scope>
</reference>
<reference key="11">
    <citation type="journal article" date="2002" name="Mol. Cell. Neurosci.">
        <title>USP7, a ubiquitin-specific protease, interacts with ataxin-1, the SCA1 gene product.</title>
        <authorList>
            <person name="Hong S."/>
            <person name="Kim S.J."/>
            <person name="Ka S."/>
            <person name="Choi I."/>
            <person name="Kang S."/>
        </authorList>
    </citation>
    <scope>SUBCELLULAR LOCATION</scope>
    <scope>INTERACTION WITH USP7</scope>
</reference>
<reference key="12">
    <citation type="journal article" date="2003" name="Neuron">
        <title>Serine 776 of ataxin-1 is critical for polyglutamine-induced disease in SCA1 transgenic mice.</title>
        <authorList>
            <person name="Emamian E.S."/>
            <person name="Kaytor M.D."/>
            <person name="Duvick L.A."/>
            <person name="Zu T."/>
            <person name="Tousey S.K."/>
            <person name="Zoghbi H.Y."/>
            <person name="Clark H.B."/>
            <person name="Orr H.T."/>
        </authorList>
    </citation>
    <scope>PHOSPHORYLATION AT SER-775</scope>
    <scope>MUTAGENESIS OF SER-775</scope>
</reference>
<reference key="13">
    <citation type="journal article" date="2005" name="EMBO J.">
        <title>Boat, an AXH domain protein, suppresses the cytotoxicity of mutant ataxin-1.</title>
        <authorList>
            <person name="Mizutani A."/>
            <person name="Wang L."/>
            <person name="Rajan H."/>
            <person name="Vig P.J.S."/>
            <person name="Alaynick W.A."/>
            <person name="Thaler J.P."/>
            <person name="Tsai C.-C."/>
        </authorList>
    </citation>
    <scope>INTERACTION WITH ATXN1L</scope>
</reference>
<reference key="14">
    <citation type="journal article" date="2005" name="J. Biol. Chem.">
        <title>SUMOylation of the polyglutamine repeat protein, ataxin-1, is dependent on a functional nuclear localization signal.</title>
        <authorList>
            <person name="Riley B.E."/>
            <person name="Zoghbi H.Y."/>
            <person name="Orr H.T."/>
        </authorList>
    </citation>
    <scope>SUMOYLATION AT LYS-16; LYS-194; LYS-609; LYS-696 AND LYS-745</scope>
    <scope>MUTAGENESIS OF LYS-16; LYS-194; LYS-420; LYS-529; LYS-589; LYS-594; LYS-609; LYS-691; LYS-696; LYS-745 AND LYS-784</scope>
</reference>
<reference key="15">
    <citation type="journal article" date="2008" name="Proc. Natl. Acad. Sci. U.S.A.">
        <title>A quantitative atlas of mitotic phosphorylation.</title>
        <authorList>
            <person name="Dephoure N."/>
            <person name="Zhou C."/>
            <person name="Villen J."/>
            <person name="Beausoleil S.A."/>
            <person name="Bakalarski C.E."/>
            <person name="Elledge S.J."/>
            <person name="Gygi S.P."/>
        </authorList>
    </citation>
    <scope>PHOSPHORYLATION [LARGE SCALE ANALYSIS] AT SER-238</scope>
    <scope>IDENTIFICATION BY MASS SPECTROMETRY [LARGE SCALE ANALYSIS]</scope>
    <source>
        <tissue>Cervix carcinoma</tissue>
    </source>
</reference>
<reference key="16">
    <citation type="journal article" date="2011" name="EMBO Rep.">
        <title>Ataxin-1 and Brother of ataxin-1 are components of the Notch signalling pathway.</title>
        <authorList>
            <person name="Tong X."/>
            <person name="Gui H."/>
            <person name="Jin F."/>
            <person name="Heck B.W."/>
            <person name="Lin P."/>
            <person name="Ma J."/>
            <person name="Fondell J.D."/>
            <person name="Tsai C.C."/>
        </authorList>
    </citation>
    <scope>FUNCTION</scope>
    <scope>INTERACTION WITH RBPJ</scope>
</reference>
<reference key="17">
    <citation type="journal article" date="2013" name="J. Proteome Res.">
        <title>Toward a comprehensive characterization of a human cancer cell phosphoproteome.</title>
        <authorList>
            <person name="Zhou H."/>
            <person name="Di Palma S."/>
            <person name="Preisinger C."/>
            <person name="Peng M."/>
            <person name="Polat A.N."/>
            <person name="Heck A.J."/>
            <person name="Mohammed S."/>
        </authorList>
    </citation>
    <scope>PHOSPHORYLATION [LARGE SCALE ANALYSIS] AT SER-88</scope>
    <scope>IDENTIFICATION BY MASS SPECTROMETRY [LARGE SCALE ANALYSIS]</scope>
    <source>
        <tissue>Cervix carcinoma</tissue>
    </source>
</reference>
<reference key="18">
    <citation type="journal article" date="2015" name="Cell">
        <title>Pumilio1 haploinsufficiency leads to SCA1-like neurodegeneration by increasing wild-type Ataxin1 levels.</title>
        <authorList>
            <person name="Gennarino V.A."/>
            <person name="Singh R.K."/>
            <person name="White J.J."/>
            <person name="De Maio A."/>
            <person name="Han K."/>
            <person name="Kim J.Y."/>
            <person name="Jafar-Nejad P."/>
            <person name="di Ronza A."/>
            <person name="Kang H."/>
            <person name="Sayegh L.S."/>
            <person name="Cooper T.A."/>
            <person name="Orr H.T."/>
            <person name="Sillitoe R.V."/>
            <person name="Zoghbi H.Y."/>
        </authorList>
    </citation>
    <scope>INDUCTION</scope>
</reference>
<reference key="19">
    <citation type="journal article" date="2004" name="J. Biol. Chem.">
        <title>The structure of the AXH domain of spinocerebellar ataxin-1.</title>
        <authorList>
            <person name="Chen Y.W."/>
            <person name="Allen M.D."/>
            <person name="Veprintsev D.B."/>
            <person name="Lowe J."/>
            <person name="Bycroft M."/>
        </authorList>
    </citation>
    <scope>X-RAY CRYSTALLOGRAPHY (1.7 ANGSTROMS) OF 563-693</scope>
    <scope>SUBUNIT</scope>
</reference>
<sequence length="815" mass="86923">MKSNQERSNECLPPKKREIPATSRSSEEKAPTLPSDNHRVEGTAWLPGNPGGRGHGGGRHGPAGTSVELGLQQGIGLHKALSTGLDYSPPSAPRSVPVATTLPAAYATPQPGTPVSPVQYAHLPHTFQFIGSSQYSGTYASFIPSQLIPPTANPVTSAVASAAGATTPSQRSQLEAYSTLLANMGSLSQTPGHKAEQQQQQQQQQQQQHQHQQQQQQQQQQQQQQHLSRAPGLITPGSPPPAQQNQYVHISSSPQNTGRTASPPAIPVHLHPHQTMIPHTLTLGPPSQVVMQYADSGSHFVPREATKKAESSRLQQAIQAKEVLNGEMEKSRRYGAPSSADLGLGKAGGKSVPHPYESRHVVVHPSPSDYSSRDPSGVRASVMVLPNSNTPAADLEVQQATHREASPSTLNDKSGLHLGKPGHRSYALSPHTVIQTTHSASEPLPVGLPATAFYAGTQPPVIGYLSGQQQAITYAGSLPQHLVIPGTQPLLIPVGSTDMEASGAAPAIVTSSPQFAAVPHTFVTTALPKSENFNPEALVTQAAYPAMVQAQIHLPVVQSVASPAAAPPTLPPYFMKGSIIQLANGELKKVEDLKTEDFIQSAEISNDLKIDSSTVERIEDSHSPGVAVIQFAVGEHRAQVSVEVLVEYPFFVFGQGWSSCCPERTSQLFDLPCSKLSVGDVCISLTLKNLKNGSVKKGQPVDPASVLLKHSKADGLAGSRHRYAEQENGINQGSAQMLSENGELKFPEKMGLPAAPFLTKIEPSKPAATRKRRWSAPESRKLEKSEDEPPLTLPKPSLIPQEVKICIEGRSNVGK</sequence>
<dbReference type="EMBL" id="X79204">
    <property type="protein sequence ID" value="CAA55793.1"/>
    <property type="molecule type" value="mRNA"/>
</dbReference>
<dbReference type="EMBL" id="AL009031">
    <property type="status" value="NOT_ANNOTATED_CDS"/>
    <property type="molecule type" value="Genomic_DNA"/>
</dbReference>
<dbReference type="EMBL" id="BC117125">
    <property type="protein sequence ID" value="AAI17126.1"/>
    <property type="molecule type" value="mRNA"/>
</dbReference>
<dbReference type="EMBL" id="S82497">
    <property type="protein sequence ID" value="AAD14401.1"/>
    <property type="molecule type" value="Genomic_DNA"/>
</dbReference>
<dbReference type="CCDS" id="CCDS34342.1">
    <molecule id="P54253-1"/>
</dbReference>
<dbReference type="PIR" id="S46268">
    <property type="entry name" value="S46268"/>
</dbReference>
<dbReference type="RefSeq" id="NP_000323.2">
    <molecule id="P54253-1"/>
    <property type="nucleotide sequence ID" value="NM_000332.4"/>
</dbReference>
<dbReference type="RefSeq" id="NP_001121636.1">
    <molecule id="P54253-1"/>
    <property type="nucleotide sequence ID" value="NM_001128164.2"/>
</dbReference>
<dbReference type="PDB" id="1OA8">
    <property type="method" value="X-ray"/>
    <property type="resolution" value="1.70 A"/>
    <property type="chains" value="A/B/C/D=562-693"/>
</dbReference>
<dbReference type="PDB" id="2M41">
    <property type="method" value="NMR"/>
    <property type="chains" value="B=566-688"/>
</dbReference>
<dbReference type="PDB" id="4APT">
    <property type="method" value="X-ray"/>
    <property type="resolution" value="2.50 A"/>
    <property type="chains" value="A/B/C/D=566-688"/>
</dbReference>
<dbReference type="PDB" id="4AQP">
    <property type="method" value="X-ray"/>
    <property type="resolution" value="2.45 A"/>
    <property type="chains" value="A/B/C/D=566-688"/>
</dbReference>
<dbReference type="PDB" id="4J2J">
    <property type="method" value="X-ray"/>
    <property type="resolution" value="2.50 A"/>
    <property type="chains" value="A/B/C=562-688"/>
</dbReference>
<dbReference type="PDB" id="4J2L">
    <property type="method" value="X-ray"/>
    <property type="resolution" value="3.15 A"/>
    <property type="chains" value="A/B=562-688"/>
</dbReference>
<dbReference type="PDB" id="6QIU">
    <property type="method" value="X-ray"/>
    <property type="resolution" value="1.80 A"/>
    <property type="chains" value="P=771-780"/>
</dbReference>
<dbReference type="PDBsum" id="1OA8"/>
<dbReference type="PDBsum" id="2M41"/>
<dbReference type="PDBsum" id="4APT"/>
<dbReference type="PDBsum" id="4AQP"/>
<dbReference type="PDBsum" id="4J2J"/>
<dbReference type="PDBsum" id="4J2L"/>
<dbReference type="PDBsum" id="6QIU"/>
<dbReference type="BMRB" id="P54253"/>
<dbReference type="SASBDB" id="P54253"/>
<dbReference type="SMR" id="P54253"/>
<dbReference type="BioGRID" id="112217">
    <property type="interactions" value="471"/>
</dbReference>
<dbReference type="CORUM" id="P54253"/>
<dbReference type="DIP" id="DIP-35353N"/>
<dbReference type="FunCoup" id="P54253">
    <property type="interactions" value="3385"/>
</dbReference>
<dbReference type="IntAct" id="P54253">
    <property type="interactions" value="568"/>
</dbReference>
<dbReference type="MINT" id="P54253"/>
<dbReference type="STRING" id="9606.ENSP00000244769"/>
<dbReference type="MoonDB" id="P54253">
    <property type="type" value="Predicted"/>
</dbReference>
<dbReference type="GlyCosmos" id="P54253">
    <property type="glycosylation" value="3 sites, 1 glycan"/>
</dbReference>
<dbReference type="GlyGen" id="P54253">
    <property type="glycosylation" value="7 sites, 1 O-linked glycan (7 sites)"/>
</dbReference>
<dbReference type="iPTMnet" id="P54253"/>
<dbReference type="PhosphoSitePlus" id="P54253"/>
<dbReference type="BioMuta" id="ATXN1"/>
<dbReference type="DMDM" id="206729854"/>
<dbReference type="jPOST" id="P54253"/>
<dbReference type="MassIVE" id="P54253"/>
<dbReference type="PaxDb" id="9606-ENSP00000244769"/>
<dbReference type="PeptideAtlas" id="P54253"/>
<dbReference type="ProteomicsDB" id="56658">
    <molecule id="P54253-1"/>
</dbReference>
<dbReference type="ABCD" id="P54253">
    <property type="antibodies" value="2 sequenced antibodies"/>
</dbReference>
<dbReference type="Antibodypedia" id="1922">
    <property type="antibodies" value="818 antibodies from 43 providers"/>
</dbReference>
<dbReference type="DNASU" id="6310"/>
<dbReference type="Ensembl" id="ENST00000244769.8">
    <molecule id="P54253-1"/>
    <property type="protein sequence ID" value="ENSP00000244769.3"/>
    <property type="gene ID" value="ENSG00000124788.19"/>
</dbReference>
<dbReference type="Ensembl" id="ENST00000436367.6">
    <molecule id="P54253-1"/>
    <property type="protein sequence ID" value="ENSP00000416360.1"/>
    <property type="gene ID" value="ENSG00000124788.19"/>
</dbReference>
<dbReference type="GeneID" id="6310"/>
<dbReference type="KEGG" id="hsa:6310"/>
<dbReference type="MANE-Select" id="ENST00000436367.6">
    <property type="protein sequence ID" value="ENSP00000416360.1"/>
    <property type="RefSeq nucleotide sequence ID" value="NM_001128164.2"/>
    <property type="RefSeq protein sequence ID" value="NP_001121636.1"/>
</dbReference>
<dbReference type="UCSC" id="uc003nbt.4">
    <molecule id="P54253-1"/>
    <property type="organism name" value="human"/>
</dbReference>
<dbReference type="AGR" id="HGNC:10548"/>
<dbReference type="CTD" id="6310"/>
<dbReference type="DisGeNET" id="6310"/>
<dbReference type="GeneCards" id="ATXN1"/>
<dbReference type="GeneReviews" id="ATXN1"/>
<dbReference type="HGNC" id="HGNC:10548">
    <property type="gene designation" value="ATXN1"/>
</dbReference>
<dbReference type="HPA" id="ENSG00000124788">
    <property type="expression patterns" value="Low tissue specificity"/>
</dbReference>
<dbReference type="MalaCards" id="ATXN1"/>
<dbReference type="MIM" id="164400">
    <property type="type" value="phenotype"/>
</dbReference>
<dbReference type="MIM" id="601556">
    <property type="type" value="gene"/>
</dbReference>
<dbReference type="neXtProt" id="NX_P54253"/>
<dbReference type="OpenTargets" id="ENSG00000124788"/>
<dbReference type="Orphanet" id="98755">
    <property type="disease" value="Spinocerebellar ataxia type 1"/>
</dbReference>
<dbReference type="PharmGKB" id="PA34958"/>
<dbReference type="VEuPathDB" id="HostDB:ENSG00000124788"/>
<dbReference type="eggNOG" id="KOG4053">
    <property type="taxonomic scope" value="Eukaryota"/>
</dbReference>
<dbReference type="GeneTree" id="ENSGT00390000005939"/>
<dbReference type="HOGENOM" id="CLU_019983_0_0_1"/>
<dbReference type="InParanoid" id="P54253"/>
<dbReference type="OMA" id="HHQGGTH"/>
<dbReference type="OrthoDB" id="10000452at2759"/>
<dbReference type="PAN-GO" id="P54253">
    <property type="GO annotations" value="3 GO annotations based on evolutionary models"/>
</dbReference>
<dbReference type="PhylomeDB" id="P54253"/>
<dbReference type="TreeFam" id="TF350643"/>
<dbReference type="PathwayCommons" id="P54253"/>
<dbReference type="SignaLink" id="P54253"/>
<dbReference type="SIGNOR" id="P54253"/>
<dbReference type="BioGRID-ORCS" id="6310">
    <property type="hits" value="26 hits in 1153 CRISPR screens"/>
</dbReference>
<dbReference type="ChiTaRS" id="ATXN1">
    <property type="organism name" value="human"/>
</dbReference>
<dbReference type="EvolutionaryTrace" id="P54253"/>
<dbReference type="GeneWiki" id="Ataxin_1"/>
<dbReference type="GenomeRNAi" id="6310"/>
<dbReference type="Pharos" id="P54253">
    <property type="development level" value="Tbio"/>
</dbReference>
<dbReference type="PRO" id="PR:P54253"/>
<dbReference type="Proteomes" id="UP000005640">
    <property type="component" value="Chromosome 6"/>
</dbReference>
<dbReference type="RNAct" id="P54253">
    <property type="molecule type" value="protein"/>
</dbReference>
<dbReference type="Bgee" id="ENSG00000124788">
    <property type="expression patterns" value="Expressed in endothelial cell and 212 other cell types or tissues"/>
</dbReference>
<dbReference type="ExpressionAtlas" id="P54253">
    <property type="expression patterns" value="baseline and differential"/>
</dbReference>
<dbReference type="GO" id="GO:0005737">
    <property type="term" value="C:cytoplasm"/>
    <property type="evidence" value="ECO:0000314"/>
    <property type="project" value="UniProtKB"/>
</dbReference>
<dbReference type="GO" id="GO:0005829">
    <property type="term" value="C:cytosol"/>
    <property type="evidence" value="ECO:0000314"/>
    <property type="project" value="HPA"/>
</dbReference>
<dbReference type="GO" id="GO:0042405">
    <property type="term" value="C:nuclear inclusion body"/>
    <property type="evidence" value="ECO:0000314"/>
    <property type="project" value="UniProtKB"/>
</dbReference>
<dbReference type="GO" id="GO:0016363">
    <property type="term" value="C:nuclear matrix"/>
    <property type="evidence" value="ECO:0000314"/>
    <property type="project" value="UniProtKB"/>
</dbReference>
<dbReference type="GO" id="GO:0005730">
    <property type="term" value="C:nucleolus"/>
    <property type="evidence" value="ECO:0000314"/>
    <property type="project" value="HPA"/>
</dbReference>
<dbReference type="GO" id="GO:0005654">
    <property type="term" value="C:nucleoplasm"/>
    <property type="evidence" value="ECO:0000314"/>
    <property type="project" value="HPA"/>
</dbReference>
<dbReference type="GO" id="GO:0005634">
    <property type="term" value="C:nucleus"/>
    <property type="evidence" value="ECO:0000314"/>
    <property type="project" value="UniProtKB"/>
</dbReference>
<dbReference type="GO" id="GO:0098794">
    <property type="term" value="C:postsynapse"/>
    <property type="evidence" value="ECO:0007669"/>
    <property type="project" value="GOC"/>
</dbReference>
<dbReference type="GO" id="GO:0032991">
    <property type="term" value="C:protein-containing complex"/>
    <property type="evidence" value="ECO:0007669"/>
    <property type="project" value="Ensembl"/>
</dbReference>
<dbReference type="GO" id="GO:0003682">
    <property type="term" value="F:chromatin binding"/>
    <property type="evidence" value="ECO:0000318"/>
    <property type="project" value="GO_Central"/>
</dbReference>
<dbReference type="GO" id="GO:0003677">
    <property type="term" value="F:DNA binding"/>
    <property type="evidence" value="ECO:0007669"/>
    <property type="project" value="UniProtKB-KW"/>
</dbReference>
<dbReference type="GO" id="GO:0042802">
    <property type="term" value="F:identical protein binding"/>
    <property type="evidence" value="ECO:0000353"/>
    <property type="project" value="IntAct"/>
</dbReference>
<dbReference type="GO" id="GO:0034046">
    <property type="term" value="F:poly(G) binding"/>
    <property type="evidence" value="ECO:0000314"/>
    <property type="project" value="UniProtKB"/>
</dbReference>
<dbReference type="GO" id="GO:0008266">
    <property type="term" value="F:poly(U) RNA binding"/>
    <property type="evidence" value="ECO:0000314"/>
    <property type="project" value="UniProtKB"/>
</dbReference>
<dbReference type="GO" id="GO:0031208">
    <property type="term" value="F:POZ domain binding"/>
    <property type="evidence" value="ECO:0007669"/>
    <property type="project" value="Ensembl"/>
</dbReference>
<dbReference type="GO" id="GO:0003723">
    <property type="term" value="F:RNA binding"/>
    <property type="evidence" value="ECO:0000318"/>
    <property type="project" value="GO_Central"/>
</dbReference>
<dbReference type="GO" id="GO:0008344">
    <property type="term" value="P:adult locomotory behavior"/>
    <property type="evidence" value="ECO:0007669"/>
    <property type="project" value="Ensembl"/>
</dbReference>
<dbReference type="GO" id="GO:0007420">
    <property type="term" value="P:brain development"/>
    <property type="evidence" value="ECO:0000250"/>
    <property type="project" value="UniProtKB"/>
</dbReference>
<dbReference type="GO" id="GO:0060079">
    <property type="term" value="P:excitatory postsynaptic potential"/>
    <property type="evidence" value="ECO:0007669"/>
    <property type="project" value="Ensembl"/>
</dbReference>
<dbReference type="GO" id="GO:0048009">
    <property type="term" value="P:insulin-like growth factor receptor signaling pathway"/>
    <property type="evidence" value="ECO:0007669"/>
    <property type="project" value="Ensembl"/>
</dbReference>
<dbReference type="GO" id="GO:0007612">
    <property type="term" value="P:learning"/>
    <property type="evidence" value="ECO:0000250"/>
    <property type="project" value="UniProtKB"/>
</dbReference>
<dbReference type="GO" id="GO:0048286">
    <property type="term" value="P:lung alveolus development"/>
    <property type="evidence" value="ECO:0007669"/>
    <property type="project" value="Ensembl"/>
</dbReference>
<dbReference type="GO" id="GO:0007613">
    <property type="term" value="P:memory"/>
    <property type="evidence" value="ECO:0000250"/>
    <property type="project" value="UniProtKB"/>
</dbReference>
<dbReference type="GO" id="GO:0045892">
    <property type="term" value="P:negative regulation of DNA-templated transcription"/>
    <property type="evidence" value="ECO:0000314"/>
    <property type="project" value="UniProtKB"/>
</dbReference>
<dbReference type="GO" id="GO:0043569">
    <property type="term" value="P:negative regulation of insulin-like growth factor receptor signaling pathway"/>
    <property type="evidence" value="ECO:0007669"/>
    <property type="project" value="Ensembl"/>
</dbReference>
<dbReference type="GO" id="GO:0000122">
    <property type="term" value="P:negative regulation of transcription by RNA polymerase II"/>
    <property type="evidence" value="ECO:0000318"/>
    <property type="project" value="GO_Central"/>
</dbReference>
<dbReference type="GO" id="GO:0051168">
    <property type="term" value="P:nuclear export"/>
    <property type="evidence" value="ECO:0000314"/>
    <property type="project" value="UniProtKB"/>
</dbReference>
<dbReference type="GO" id="GO:0060252">
    <property type="term" value="P:positive regulation of glial cell proliferation"/>
    <property type="evidence" value="ECO:0007669"/>
    <property type="project" value="Ensembl"/>
</dbReference>
<dbReference type="GO" id="GO:0045944">
    <property type="term" value="P:positive regulation of transcription by RNA polymerase II"/>
    <property type="evidence" value="ECO:0007669"/>
    <property type="project" value="Ensembl"/>
</dbReference>
<dbReference type="GO" id="GO:0006396">
    <property type="term" value="P:RNA processing"/>
    <property type="evidence" value="ECO:0000303"/>
    <property type="project" value="UniProtKB"/>
</dbReference>
<dbReference type="GO" id="GO:0035176">
    <property type="term" value="P:social behavior"/>
    <property type="evidence" value="ECO:0000250"/>
    <property type="project" value="UniProtKB"/>
</dbReference>
<dbReference type="GO" id="GO:0006366">
    <property type="term" value="P:transcription by RNA polymerase II"/>
    <property type="evidence" value="ECO:0007669"/>
    <property type="project" value="Ensembl"/>
</dbReference>
<dbReference type="GO" id="GO:0008542">
    <property type="term" value="P:visual learning"/>
    <property type="evidence" value="ECO:0007669"/>
    <property type="project" value="Ensembl"/>
</dbReference>
<dbReference type="InterPro" id="IPR020997">
    <property type="entry name" value="Ataxin-1_N"/>
</dbReference>
<dbReference type="InterPro" id="IPR043404">
    <property type="entry name" value="ATAXIN1-like"/>
</dbReference>
<dbReference type="InterPro" id="IPR003652">
    <property type="entry name" value="Ataxin_AXH_dom"/>
</dbReference>
<dbReference type="InterPro" id="IPR036096">
    <property type="entry name" value="Ataxin_AXH_dom_sf"/>
</dbReference>
<dbReference type="PANTHER" id="PTHR13392">
    <property type="entry name" value="ATAXIN 1"/>
    <property type="match status" value="1"/>
</dbReference>
<dbReference type="PANTHER" id="PTHR13392:SF5">
    <property type="entry name" value="ATAXIN-1"/>
    <property type="match status" value="1"/>
</dbReference>
<dbReference type="Pfam" id="PF12547">
    <property type="entry name" value="ATXN-1_C"/>
    <property type="match status" value="2"/>
</dbReference>
<dbReference type="Pfam" id="PF08517">
    <property type="entry name" value="AXH"/>
    <property type="match status" value="1"/>
</dbReference>
<dbReference type="SMART" id="SM00536">
    <property type="entry name" value="AXH"/>
    <property type="match status" value="1"/>
</dbReference>
<dbReference type="SUPFAM" id="SSF102031">
    <property type="entry name" value="AXH domain"/>
    <property type="match status" value="1"/>
</dbReference>
<dbReference type="PROSITE" id="PS51148">
    <property type="entry name" value="AXH"/>
    <property type="match status" value="1"/>
</dbReference>
<feature type="chain" id="PRO_0000064751" description="Ataxin-1">
    <location>
        <begin position="1"/>
        <end position="815"/>
    </location>
</feature>
<feature type="domain" description="AXH" evidence="2">
    <location>
        <begin position="562"/>
        <end position="693"/>
    </location>
</feature>
<feature type="region of interest" description="Disordered" evidence="3">
    <location>
        <begin position="1"/>
        <end position="63"/>
    </location>
</feature>
<feature type="region of interest" description="Disordered" evidence="3">
    <location>
        <begin position="185"/>
        <end position="270"/>
    </location>
</feature>
<feature type="region of interest" description="Disordered" evidence="3">
    <location>
        <begin position="329"/>
        <end position="355"/>
    </location>
</feature>
<feature type="region of interest" description="Disordered" evidence="3">
    <location>
        <begin position="397"/>
        <end position="424"/>
    </location>
</feature>
<feature type="region of interest" description="Self-association" evidence="17">
    <location>
        <begin position="494"/>
        <end position="604"/>
    </location>
</feature>
<feature type="region of interest" description="Interaction with USP7" evidence="7">
    <location>
        <begin position="538"/>
        <end position="815"/>
    </location>
</feature>
<feature type="region of interest" description="RNA-binding" evidence="5">
    <location>
        <begin position="540"/>
        <end position="766"/>
    </location>
</feature>
<feature type="region of interest" description="Disordered" evidence="3">
    <location>
        <begin position="762"/>
        <end position="798"/>
    </location>
</feature>
<feature type="short sequence motif" description="Nuclear localization signal" evidence="1">
    <location>
        <begin position="794"/>
        <end position="797"/>
    </location>
</feature>
<feature type="compositionally biased region" description="Basic and acidic residues" evidence="3">
    <location>
        <begin position="1"/>
        <end position="41"/>
    </location>
</feature>
<feature type="compositionally biased region" description="Gly residues" evidence="3">
    <location>
        <begin position="49"/>
        <end position="61"/>
    </location>
</feature>
<feature type="compositionally biased region" description="Low complexity" evidence="3">
    <location>
        <begin position="197"/>
        <end position="226"/>
    </location>
</feature>
<feature type="compositionally biased region" description="Polar residues" evidence="3">
    <location>
        <begin position="243"/>
        <end position="260"/>
    </location>
</feature>
<feature type="modified residue" description="Phosphoserine" evidence="1">
    <location>
        <position position="82"/>
    </location>
</feature>
<feature type="modified residue" description="Phosphoserine" evidence="21">
    <location>
        <position position="88"/>
    </location>
</feature>
<feature type="modified residue" description="Phosphoserine" evidence="20">
    <location>
        <position position="238"/>
    </location>
</feature>
<feature type="modified residue" description="Phosphoserine" evidence="1">
    <location>
        <position position="253"/>
    </location>
</feature>
<feature type="modified residue" description="Phosphoserine" evidence="8">
    <location>
        <position position="775"/>
    </location>
</feature>
<feature type="cross-link" description="Glycyl lysine isopeptide (Lys-Gly) (interchain with G-Cter in SUMO)" evidence="10">
    <location>
        <position position="16"/>
    </location>
</feature>
<feature type="cross-link" description="Glycyl lysine isopeptide (Lys-Gly) (interchain with G-Cter in SUMO)" evidence="10">
    <location>
        <position position="194"/>
    </location>
</feature>
<feature type="cross-link" description="Glycyl lysine isopeptide (Lys-Gly) (interchain with G-Cter in SUMO)" evidence="10">
    <location>
        <position position="609"/>
    </location>
</feature>
<feature type="cross-link" description="Glycyl lysine isopeptide (Lys-Gly) (interchain with G-Cter in SUMO)" evidence="10">
    <location>
        <position position="696"/>
    </location>
</feature>
<feature type="cross-link" description="Glycyl lysine isopeptide (Lys-Gly) (interchain with G-Cter in SUMO)" evidence="10">
    <location>
        <position position="745"/>
    </location>
</feature>
<feature type="sequence variant" id="VAR_046616" description="In dbSNP:rs11969612.">
    <original>H</original>
    <variation>Q</variation>
    <location>
        <position position="209"/>
    </location>
</feature>
<feature type="sequence variant" id="VAR_046617" description="In dbSNP:rs16885.">
    <original>P</original>
    <variation>S</variation>
    <location>
        <position position="753"/>
    </location>
</feature>
<feature type="mutagenesis site" description="Sumoylation reduced to 40% of wild-type." evidence="10">
    <original>K</original>
    <variation>R</variation>
    <location>
        <position position="16"/>
    </location>
</feature>
<feature type="mutagenesis site" description="Sumoylation reduced to 46% of wild-type." evidence="10">
    <original>K</original>
    <variation>R</variation>
    <location>
        <position position="194"/>
    </location>
</feature>
<feature type="mutagenesis site" description="No effect on sumoylation." evidence="10">
    <original>K</original>
    <variation>R</variation>
    <location>
        <position position="420"/>
    </location>
</feature>
<feature type="mutagenesis site" description="Sumoylation reduced to 57% of wild-type." evidence="10">
    <original>K</original>
    <variation>R</variation>
    <location>
        <position position="529"/>
    </location>
</feature>
<feature type="mutagenesis site" description="Sumoylation reduced to 53% of wild-type." evidence="10">
    <original>K</original>
    <variation>R</variation>
    <location>
        <position position="589"/>
    </location>
</feature>
<feature type="mutagenesis site" description="Sumoylation reduced to 68% of wild-type." evidence="10">
    <original>K</original>
    <variation>R</variation>
    <location>
        <position position="594"/>
    </location>
</feature>
<feature type="mutagenesis site" description="Sumoylation reduced to 43% of wild-type." evidence="10">
    <original>K</original>
    <variation>R</variation>
    <location>
        <position position="609"/>
    </location>
</feature>
<feature type="mutagenesis site" description="No effect on sumoylation." evidence="10">
    <original>K</original>
    <variation>R</variation>
    <location>
        <position position="691"/>
    </location>
</feature>
<feature type="mutagenesis site" description="Sumoylation reduced to 42% of wild-type." evidence="10">
    <original>K</original>
    <variation>R</variation>
    <location>
        <position position="696"/>
    </location>
</feature>
<feature type="mutagenesis site" description="Sumoylation reduced to 44% of wild-type." evidence="10">
    <original>K</original>
    <variation>R</variation>
    <location>
        <position position="745"/>
    </location>
</feature>
<feature type="mutagenesis site" description="Reduces phosphorylation but does not affect nuclear localization." evidence="8">
    <original>S</original>
    <variation>A</variation>
    <location>
        <position position="775"/>
    </location>
</feature>
<feature type="mutagenesis site" description="Sumoylation reduced to 62% of wild-type." evidence="10">
    <original>K</original>
    <variation>R</variation>
    <location>
        <position position="784"/>
    </location>
</feature>
<feature type="sequence conflict" description="In Ref. 1; CAA55793." evidence="19" ref="1">
    <original>H</original>
    <variation>HQ</variation>
    <location>
        <position position="211"/>
    </location>
</feature>
<feature type="strand" evidence="23">
    <location>
        <begin position="568"/>
        <end position="570"/>
    </location>
</feature>
<feature type="helix" evidence="22">
    <location>
        <begin position="572"/>
        <end position="574"/>
    </location>
</feature>
<feature type="strand" evidence="22">
    <location>
        <begin position="579"/>
        <end position="581"/>
    </location>
</feature>
<feature type="strand" evidence="22">
    <location>
        <begin position="587"/>
        <end position="589"/>
    </location>
</feature>
<feature type="helix" evidence="22">
    <location>
        <begin position="590"/>
        <end position="592"/>
    </location>
</feature>
<feature type="helix" evidence="22">
    <location>
        <begin position="595"/>
        <end position="604"/>
    </location>
</feature>
<feature type="strand" evidence="22">
    <location>
        <begin position="606"/>
        <end position="620"/>
    </location>
</feature>
<feature type="strand" evidence="22">
    <location>
        <begin position="626"/>
        <end position="633"/>
    </location>
</feature>
<feature type="turn" evidence="22">
    <location>
        <begin position="634"/>
        <end position="637"/>
    </location>
</feature>
<feature type="strand" evidence="22">
    <location>
        <begin position="638"/>
        <end position="645"/>
    </location>
</feature>
<feature type="strand" evidence="22">
    <location>
        <begin position="650"/>
        <end position="652"/>
    </location>
</feature>
<feature type="turn" evidence="22">
    <location>
        <begin position="653"/>
        <end position="655"/>
    </location>
</feature>
<feature type="strand" evidence="22">
    <location>
        <begin position="656"/>
        <end position="660"/>
    </location>
</feature>
<feature type="helix" evidence="22">
    <location>
        <begin position="662"/>
        <end position="669"/>
    </location>
</feature>
<feature type="strand" evidence="24">
    <location>
        <begin position="673"/>
        <end position="675"/>
    </location>
</feature>
<feature type="strand" evidence="22">
    <location>
        <begin position="681"/>
        <end position="687"/>
    </location>
</feature>
<evidence type="ECO:0000250" key="1">
    <source>
        <dbReference type="UniProtKB" id="P54254"/>
    </source>
</evidence>
<evidence type="ECO:0000255" key="2">
    <source>
        <dbReference type="PROSITE-ProRule" id="PRU00496"/>
    </source>
</evidence>
<evidence type="ECO:0000256" key="3">
    <source>
        <dbReference type="SAM" id="MobiDB-lite"/>
    </source>
</evidence>
<evidence type="ECO:0000269" key="4">
    <source>
    </source>
</evidence>
<evidence type="ECO:0000269" key="5">
    <source>
    </source>
</evidence>
<evidence type="ECO:0000269" key="6">
    <source>
    </source>
</evidence>
<evidence type="ECO:0000269" key="7">
    <source>
    </source>
</evidence>
<evidence type="ECO:0000269" key="8">
    <source>
    </source>
</evidence>
<evidence type="ECO:0000269" key="9">
    <source>
    </source>
</evidence>
<evidence type="ECO:0000269" key="10">
    <source>
    </source>
</evidence>
<evidence type="ECO:0000269" key="11">
    <source>
    </source>
</evidence>
<evidence type="ECO:0000269" key="12">
    <source>
    </source>
</evidence>
<evidence type="ECO:0000269" key="13">
    <source>
    </source>
</evidence>
<evidence type="ECO:0000269" key="14">
    <source>
    </source>
</evidence>
<evidence type="ECO:0000269" key="15">
    <source>
    </source>
</evidence>
<evidence type="ECO:0000269" key="16">
    <source>
    </source>
</evidence>
<evidence type="ECO:0000269" key="17">
    <source>
    </source>
</evidence>
<evidence type="ECO:0000269" key="18">
    <source>
    </source>
</evidence>
<evidence type="ECO:0000305" key="19"/>
<evidence type="ECO:0007744" key="20">
    <source>
    </source>
</evidence>
<evidence type="ECO:0007744" key="21">
    <source>
    </source>
</evidence>
<evidence type="ECO:0007829" key="22">
    <source>
        <dbReference type="PDB" id="1OA8"/>
    </source>
</evidence>
<evidence type="ECO:0007829" key="23">
    <source>
        <dbReference type="PDB" id="2M41"/>
    </source>
</evidence>
<evidence type="ECO:0007829" key="24">
    <source>
        <dbReference type="PDB" id="4J2L"/>
    </source>
</evidence>
<proteinExistence type="evidence at protein level"/>
<gene>
    <name type="primary">ATXN1</name>
    <name type="synonym">ATX1</name>
    <name type="synonym">SCA1</name>
</gene>
<keyword id="KW-0002">3D-structure</keyword>
<keyword id="KW-0025">Alternative splicing</keyword>
<keyword id="KW-0963">Cytoplasm</keyword>
<keyword id="KW-0238">DNA-binding</keyword>
<keyword id="KW-1017">Isopeptide bond</keyword>
<keyword id="KW-0523">Neurodegeneration</keyword>
<keyword id="KW-0539">Nucleus</keyword>
<keyword id="KW-0597">Phosphoprotein</keyword>
<keyword id="KW-1267">Proteomics identification</keyword>
<keyword id="KW-1185">Reference proteome</keyword>
<keyword id="KW-0678">Repressor</keyword>
<keyword id="KW-0694">RNA-binding</keyword>
<keyword id="KW-0950">Spinocerebellar ataxia</keyword>
<keyword id="KW-0804">Transcription</keyword>
<keyword id="KW-0805">Transcription regulation</keyword>
<keyword id="KW-0818">Triplet repeat expansion</keyword>
<keyword id="KW-0832">Ubl conjugation</keyword>
<organism>
    <name type="scientific">Homo sapiens</name>
    <name type="common">Human</name>
    <dbReference type="NCBI Taxonomy" id="9606"/>
    <lineage>
        <taxon>Eukaryota</taxon>
        <taxon>Metazoa</taxon>
        <taxon>Chordata</taxon>
        <taxon>Craniata</taxon>
        <taxon>Vertebrata</taxon>
        <taxon>Euteleostomi</taxon>
        <taxon>Mammalia</taxon>
        <taxon>Eutheria</taxon>
        <taxon>Euarchontoglires</taxon>
        <taxon>Primates</taxon>
        <taxon>Haplorrhini</taxon>
        <taxon>Catarrhini</taxon>
        <taxon>Hominidae</taxon>
        <taxon>Homo</taxon>
    </lineage>
</organism>
<accession>P54253</accession>
<accession>Q17S02</accession>
<accession>Q9UJG2</accession>
<accession>Q9Y4J1</accession>